<accession>Q9UNE7</accession>
<accession>A2IDB9</accession>
<accession>O60526</accession>
<accession>Q969U2</accession>
<accession>Q9HBT1</accession>
<comment type="function">
    <text evidence="2 3 5 6 8 10 13 16 18 19 20 22 25 26 27 30 34 35 37 38 39 42">E3 ubiquitin-protein ligase which targets misfolded chaperone substrates towards proteasomal degradation (PubMed:10330192, PubMed:11146632, PubMed:11557750, PubMed:23990462, PubMed:26265139). Plays a role in the maintenance of mitochondrial morphology and promotes mitophagic removal of dysfunctional mitochondria; thereby acts as a protector against apoptosis in response to cellular stress (By similarity). Negatively regulates vascular smooth muscle contraction, via degradation of the transcriptional activator MYOCD and subsequent loss of transcription of genes involved in vascular smooth muscle contraction (By similarity). Promotes survival and proliferation of cardiac smooth muscle cells via ubiquitination and degradation of FOXO1, resulting in subsequent repression of FOXO1-mediated transcription of pro-apoptotic genes (PubMed:19483080). Ubiquitinates ICER-type isoforms of CREM and targets them for proteasomal degradation, thereby acts as a positive effector of MAPK/ERK-mediated inhibition of apoptosis in cardiomyocytes (PubMed:20724525). Inhibits lipopolysaccharide-induced apoptosis and hypertrophy in cardiomyocytes, via ubiquitination and subsequent proteasomal degradation of NFATC3 (PubMed:30980393). Collaborates with ATXN3 in the degradation of misfolded chaperone substrates: ATXN3 restricting the length of ubiquitin chain attached to STUB1/CHIP substrates and preventing further chain extension (PubMed:10330192, PubMed:11146632, PubMed:11557750, PubMed:23990462). Ubiquitinates NOS1 in concert with Hsp70 and Hsp40 (PubMed:15466472). Modulates the activity of several chaperone complexes, including Hsp70, Hsc70 and Hsp90 (PubMed:10330192, PubMed:11146632, PubMed:15466472). Ubiquitinates CHRNA3 targeting it for endoplasmic reticulum-associated degradation in cortical neurons, as part of the STUB1-VCP-UBXN2A complex (PubMed:26265139). Ubiquitinates and promotes ESR1 proteasomal degradation in response to age-related circulating estradiol (17-beta-estradiol/E2) decline, thereby promotes neuronal apoptosis in response to ischemic reperfusion injury (By similarity). Mediates transfer of non-canonical short ubiquitin chains to HSPA8 that have no effect on HSPA8 degradation (PubMed:11557750, PubMed:23990462). Mediates polyubiquitination of DNA polymerase beta (POLB) at 'Lys-41', 'Lys-61' and 'Lys-81', thereby playing a role in base-excision repair: catalyzes polyubiquitination by amplifying the HUWE1/ARF-BP1-dependent monoubiquitination and leading to POLB-degradation by the proteasome (PubMed:19713937). Mediates polyubiquitination of CYP3A4 (PubMed:19103148). Ubiquitinates EPHA2 and may regulate the receptor stability and activity through proteasomal degradation (PubMed:19567782). Acts as a co-chaperone for HSPA1A and HSPA1B chaperone proteins and promotes ubiquitin-mediated protein degradation (PubMed:27708256). Negatively regulates the suppressive function of regulatory T-cells (Treg) during inflammation by mediating the ubiquitination and degradation of FOXP3 in a HSPA1A/B-dependent manner (PubMed:23973223). Catalyzes monoubiquitination of SIRT6, preventing its degradation by the proteasome (PubMed:24043303). Likely mediates polyubiquitination and down-regulates plasma membrane expression of PD-L1/CD274, an immune inhibitory ligand critical for immune tolerance to self and antitumor immunity (PubMed:28813410). Negatively regulates TGF-beta signaling by modulating the basal level of SMAD3 via ubiquitin-mediated degradation (PubMed:24613385). Plays a role in the degradation of TP53 (PubMed:26634371). Mediates ubiquitination of RIPK3 leading to its subsequent proteasome-dependent degradation (PubMed:29883609). May regulate myosin assembly in striated muscles together with UBE4B and VCP/p97 by targeting myosin chaperone UNC45B for proteasomal degradation (PubMed:17369820). Ubiquitinates PPARG in macrophages playing a role in M2 macrophages polarization and angiogenesis (By similarity).</text>
</comment>
<comment type="catalytic activity">
    <reaction evidence="8 10 27">
        <text>S-ubiquitinyl-[E2 ubiquitin-conjugating enzyme]-L-cysteine + [acceptor protein]-L-lysine = [E2 ubiquitin-conjugating enzyme]-L-cysteine + N(6)-ubiquitinyl-[acceptor protein]-L-lysine.</text>
        <dbReference type="EC" id="2.3.2.27"/>
    </reaction>
</comment>
<comment type="pathway">
    <text evidence="8 10">Protein modification; protein ubiquitination.</text>
</comment>
<comment type="subunit">
    <text evidence="2 3 5 6 8 9 11 12 13 15 17 18 20 21 22 23 26 30 34 36 37 42">Homodimer (By similarity). Interacts with BAG2 (PubMed:16169850). Interacts with E2 ubiquitin conjugating enzymes UBE2D1, UBE2D2 and UBE2D3 (PubMed:11557750). Detected in a ternary complex containing STUB1, HSPA1A and HSPBP1 (PubMed:15215316). Part of a complex composed of STUB1/CHIP, VCP/p97, CHRNA3, and UBXN2A that modulates the ubiquitination and endoplasmic reticulum-associated degradation (ERAD) of CHRNA3 (PubMed:26265139). Within the complex UBXN2A acts as a scaffold protein required for the interaction of CHRNA3 with VCP/p97, this interaction also inhibits CHRNA3 ubiquitination by STUB1/CHIP and subsequently ERAD (PubMed:26265139). Interacts with MKKS (PubMed:18094050). Interacts with DNAAF4 (PubMed:19423554). Interacts (when monoubiquitinated) with ATXN3. Interacts with UBE2W. Interacts (via the U-box domain) with the UBE2V2-UBE2N heterodimer; the complex has a specific 'Lys-63'-linked polyubiquitination activity (By similarity). Interacts with DNAJB6 (PubMed:22366786). Interacts with FLCN (PubMed:27353360). Interacts with HSP90AA1 (PubMed:24613385, PubMed:27353360). Interacts with HSP90 (PubMed:11146632). Interacts with UBE2N and UBE2V1 (PubMed:16307917). Interacts (via TPR repeats) with HSPA8 (via C-terminus) (PubMed:10330192, PubMed:11557750, PubMed:23990462, PubMed:27708256). Interacts (via TPR repeats) with HSPA1A (via C-terminus) (PubMed:10330192). Interacts with the non-acetylated form of HSPA1A and HSPA1B (PubMed:27708256). Interacts with SMAD3 and HSP90AB1 (PubMed:24613385). Interacts with UBE4B (PubMed:17369820). Interacts with PRMT5 (PubMed:33376131). Interacts with MYOCD (via C-terminus) (By similarity). Interacts with FOXO1 (when phosphorylated on 'Ser-256') (PubMed:19483080). Interacts with MAPK7/ERK5; the interaction is enhanced in the presence of IGF1 or MAP2K5 and promotes STUB1/CHIP E3 ligase activity (PubMed:20724525). Interacts with and ubiquitinates ESR1; the interaction is promoted in the absence of estradiol (17-beta-estradiol/E2) (By similarity). Interacts with ESR2 (By similarity). Interacts with and ubiquitinates NFATC3; HSPA1A/HSP70 is required as a co-chaperone (PubMed:30980393). In macrophages, interacts with PAQR3; the interaction promotes PPARG poylubiquitination and STUB1-mediated degradation (By similarity). Component of the chaperone-assisted selective autophagy (CASA) complex consisting of BAG3, HSPA8/HSC70, HSPB8 and STUB1/CHIP (PubMed:20060297).</text>
</comment>
<comment type="interaction">
    <interactant intactId="EBI-357085">
        <id>Q9UNE7</id>
    </interactant>
    <interactant intactId="EBI-640741">
        <id>P01023</id>
        <label>A2M</label>
    </interactant>
    <organismsDiffer>false</organismsDiffer>
    <experiments>3</experiments>
</comment>
<comment type="interaction">
    <interactant intactId="EBI-357085">
        <id>Q9UNE7</id>
    </interactant>
    <interactant intactId="EBI-717666">
        <id>Q96AP0</id>
        <label>ACD</label>
    </interactant>
    <organismsDiffer>false</organismsDiffer>
    <experiments>2</experiments>
</comment>
<comment type="interaction">
    <interactant intactId="EBI-357085">
        <id>Q9UNE7</id>
    </interactant>
    <interactant intactId="EBI-351428">
        <id>P61158</id>
        <label>ACTR3</label>
    </interactant>
    <organismsDiffer>false</organismsDiffer>
    <experiments>3</experiments>
</comment>
<comment type="interaction">
    <interactant intactId="EBI-357085">
        <id>Q9UNE7</id>
    </interactant>
    <interactant intactId="EBI-25928834">
        <id>A0A0S2Z5Q7</id>
        <label>ALS2</label>
    </interactant>
    <organismsDiffer>false</organismsDiffer>
    <experiments>3</experiments>
</comment>
<comment type="interaction">
    <interactant intactId="EBI-357085">
        <id>Q9UNE7</id>
    </interactant>
    <interactant intactId="EBI-1783328">
        <id>Q86WG3</id>
        <label>ATCAY</label>
    </interactant>
    <organismsDiffer>false</organismsDiffer>
    <experiments>4</experiments>
</comment>
<comment type="interaction">
    <interactant intactId="EBI-357085">
        <id>Q9UNE7</id>
    </interactant>
    <interactant intactId="EBI-1030678">
        <id>Q99933</id>
        <label>BAG1</label>
    </interactant>
    <organismsDiffer>false</organismsDiffer>
    <experiments>2</experiments>
</comment>
<comment type="interaction">
    <interactant intactId="EBI-357085">
        <id>Q9UNE7</id>
    </interactant>
    <interactant intactId="EBI-355275">
        <id>O95816</id>
        <label>BAG2</label>
    </interactant>
    <organismsDiffer>false</organismsDiffer>
    <experiments>5</experiments>
</comment>
<comment type="interaction">
    <interactant intactId="EBI-357085">
        <id>Q9UNE7</id>
    </interactant>
    <interactant intactId="EBI-747185">
        <id>O95817</id>
        <label>BAG3</label>
    </interactant>
    <organismsDiffer>false</organismsDiffer>
    <experiments>3</experiments>
</comment>
<comment type="interaction">
    <interactant intactId="EBI-357085">
        <id>Q9UNE7</id>
    </interactant>
    <interactant intactId="EBI-11532900">
        <id>J3KQ12</id>
        <label>BSCL2</label>
    </interactant>
    <organismsDiffer>false</organismsDiffer>
    <experiments>3</experiments>
</comment>
<comment type="interaction">
    <interactant intactId="EBI-357085">
        <id>Q9UNE7</id>
    </interactant>
    <interactant intactId="EBI-1383687">
        <id>Q9UQM7</id>
        <label>CAMK2A</label>
    </interactant>
    <organismsDiffer>false</organismsDiffer>
    <experiments>3</experiments>
</comment>
<comment type="interaction">
    <interactant intactId="EBI-357085">
        <id>Q9UNE7</id>
    </interactant>
    <interactant intactId="EBI-7783254">
        <id>Q9NRJ3</id>
        <label>CCL28</label>
    </interactant>
    <organismsDiffer>false</organismsDiffer>
    <experiments>3</experiments>
</comment>
<comment type="interaction">
    <interactant intactId="EBI-357085">
        <id>Q9UNE7</id>
    </interactant>
    <interactant intactId="EBI-1045797">
        <id>Q8N5K1</id>
        <label>CISD2</label>
    </interactant>
    <organismsDiffer>false</organismsDiffer>
    <experiments>3</experiments>
</comment>
<comment type="interaction">
    <interactant intactId="EBI-357085">
        <id>Q9UNE7</id>
    </interactant>
    <interactant intactId="EBI-25836642">
        <id>Q8NE08</id>
        <label>COL25A1</label>
    </interactant>
    <organismsDiffer>false</organismsDiffer>
    <experiments>3</experiments>
</comment>
<comment type="interaction">
    <interactant intactId="EBI-357085">
        <id>Q9UNE7</id>
    </interactant>
    <interactant intactId="EBI-10200977">
        <id>P21964-2</id>
        <label>COMT</label>
    </interactant>
    <organismsDiffer>false</organismsDiffer>
    <experiments>3</experiments>
</comment>
<comment type="interaction">
    <interactant intactId="EBI-357085">
        <id>Q9UNE7</id>
    </interactant>
    <interactant intactId="EBI-997830">
        <id>Q15438</id>
        <label>CYTH1</label>
    </interactant>
    <organismsDiffer>false</organismsDiffer>
    <experiments>3</experiments>
</comment>
<comment type="interaction">
    <interactant intactId="EBI-357085">
        <id>Q9UNE7</id>
    </interactant>
    <interactant intactId="EBI-358616">
        <id>P53355</id>
        <label>DAPK1</label>
    </interactant>
    <organismsDiffer>false</organismsDiffer>
    <experiments>2</experiments>
</comment>
<comment type="interaction">
    <interactant intactId="EBI-357085">
        <id>Q9UNE7</id>
    </interactant>
    <interactant intactId="EBI-10976677">
        <id>G5E9A7</id>
        <label>DMWD</label>
    </interactant>
    <organismsDiffer>false</organismsDiffer>
    <experiments>3</experiments>
</comment>
<comment type="interaction">
    <interactant intactId="EBI-357085">
        <id>Q9UNE7</id>
    </interactant>
    <interactant intactId="EBI-9381887">
        <id>Q8WXU2-2</id>
        <label>DNAAF4</label>
    </interactant>
    <organismsDiffer>false</organismsDiffer>
    <experiments>3</experiments>
</comment>
<comment type="interaction">
    <interactant intactId="EBI-357085">
        <id>Q9UNE7</id>
    </interactant>
    <interactant intactId="EBI-7779316">
        <id>A0AVK6</id>
        <label>E2F8</label>
    </interactant>
    <organismsDiffer>false</organismsDiffer>
    <experiments>3</experiments>
</comment>
<comment type="interaction">
    <interactant intactId="EBI-357085">
        <id>Q9UNE7</id>
    </interactant>
    <interactant intactId="EBI-297353">
        <id>P00533</id>
        <label>EGFR</label>
    </interactant>
    <organismsDiffer>false</organismsDiffer>
    <experiments>4</experiments>
</comment>
<comment type="interaction">
    <interactant intactId="EBI-357085">
        <id>Q9UNE7</id>
    </interactant>
    <interactant intactId="EBI-949824">
        <id>O00471</id>
        <label>EXOC5</label>
    </interactant>
    <organismsDiffer>false</organismsDiffer>
    <experiments>3</experiments>
</comment>
<comment type="interaction">
    <interactant intactId="EBI-357085">
        <id>Q9UNE7</id>
    </interactant>
    <interactant intactId="EBI-744771">
        <id>O75344</id>
        <label>FKBP6</label>
    </interactant>
    <organismsDiffer>false</organismsDiffer>
    <experiments>3</experiments>
</comment>
<comment type="interaction">
    <interactant intactId="EBI-357085">
        <id>Q9UNE7</id>
    </interactant>
    <interactant intactId="EBI-983719">
        <id>Q9BZS1</id>
        <label>FOXP3</label>
    </interactant>
    <organismsDiffer>false</organismsDiffer>
    <experiments>7</experiments>
</comment>
<comment type="interaction">
    <interactant intactId="EBI-357085">
        <id>Q9UNE7</id>
    </interactant>
    <interactant intactId="EBI-515315">
        <id>P06241</id>
        <label>FYN</label>
    </interactant>
    <organismsDiffer>false</organismsDiffer>
    <experiments>3</experiments>
</comment>
<comment type="interaction">
    <interactant intactId="EBI-357085">
        <id>Q9UNE7</id>
    </interactant>
    <interactant intactId="EBI-6624768">
        <id>P22466</id>
        <label>GAL</label>
    </interactant>
    <organismsDiffer>false</organismsDiffer>
    <experiments>3</experiments>
</comment>
<comment type="interaction">
    <interactant intactId="EBI-357085">
        <id>Q9UNE7</id>
    </interactant>
    <interactant intactId="EBI-1955541">
        <id>Q53GS7</id>
        <label>GLE1</label>
    </interactant>
    <organismsDiffer>false</organismsDiffer>
    <experiments>3</experiments>
</comment>
<comment type="interaction">
    <interactant intactId="EBI-357085">
        <id>Q9UNE7</id>
    </interactant>
    <interactant intactId="EBI-747754">
        <id>P28799</id>
        <label>GRN</label>
    </interactant>
    <organismsDiffer>false</organismsDiffer>
    <experiments>3</experiments>
</comment>
<comment type="interaction">
    <interactant intactId="EBI-357085">
        <id>Q9UNE7</id>
    </interactant>
    <interactant intactId="EBI-296047">
        <id>P07900</id>
        <label>HSP90AA1</label>
    </interactant>
    <organismsDiffer>false</organismsDiffer>
    <experiments>9</experiments>
</comment>
<comment type="interaction">
    <interactant intactId="EBI-357085">
        <id>Q9UNE7</id>
    </interactant>
    <interactant intactId="EBI-352572">
        <id>P08238</id>
        <label>HSP90AB1</label>
    </interactant>
    <organismsDiffer>false</organismsDiffer>
    <experiments>5</experiments>
</comment>
<comment type="interaction">
    <interactant intactId="EBI-357085">
        <id>Q9UNE7</id>
    </interactant>
    <interactant intactId="EBI-629985">
        <id>P08107</id>
        <label>HSPA1B</label>
    </interactant>
    <organismsDiffer>false</organismsDiffer>
    <experiments>5</experiments>
</comment>
<comment type="interaction">
    <interactant intactId="EBI-357085">
        <id>Q9UNE7</id>
    </interactant>
    <interactant intactId="EBI-351896">
        <id>P11142</id>
        <label>HSPA8</label>
    </interactant>
    <organismsDiffer>false</organismsDiffer>
    <experiments>9</experiments>
</comment>
<comment type="interaction">
    <interactant intactId="EBI-357085">
        <id>Q9UNE7</id>
    </interactant>
    <interactant intactId="EBI-352682">
        <id>P04792</id>
        <label>HSPB1</label>
    </interactant>
    <organismsDiffer>false</organismsDiffer>
    <experiments>4</experiments>
</comment>
<comment type="interaction">
    <interactant intactId="EBI-357085">
        <id>Q9UNE7</id>
    </interactant>
    <interactant intactId="EBI-466029">
        <id>P42858</id>
        <label>HTT</label>
    </interactant>
    <organismsDiffer>false</organismsDiffer>
    <experiments>12</experiments>
</comment>
<comment type="interaction">
    <interactant intactId="EBI-357085">
        <id>Q9UNE7</id>
    </interactant>
    <interactant intactId="EBI-351935">
        <id>P02545</id>
        <label>LMNA</label>
    </interactant>
    <organismsDiffer>false</organismsDiffer>
    <experiments>3</experiments>
</comment>
<comment type="interaction">
    <interactant intactId="EBI-357085">
        <id>Q9UNE7</id>
    </interactant>
    <interactant intactId="EBI-25833471">
        <id>Q07954-2</id>
        <label>LRP1</label>
    </interactant>
    <organismsDiffer>false</organismsDiffer>
    <experiments>3</experiments>
</comment>
<comment type="interaction">
    <interactant intactId="EBI-357085">
        <id>Q9UNE7</id>
    </interactant>
    <interactant intactId="EBI-5323863">
        <id>Q5S007</id>
        <label>LRRK2</label>
    </interactant>
    <organismsDiffer>false</organismsDiffer>
    <experiments>4</experiments>
</comment>
<comment type="interaction">
    <interactant intactId="EBI-357085">
        <id>Q9UNE7</id>
    </interactant>
    <interactant intactId="EBI-357393">
        <id>Q9Y2U5</id>
        <label>MAP3K2</label>
    </interactant>
    <organismsDiffer>false</organismsDiffer>
    <experiments>9</experiments>
</comment>
<comment type="interaction">
    <interactant intactId="EBI-357085">
        <id>Q9UNE7</id>
    </interactant>
    <interactant intactId="EBI-366182">
        <id>P10636</id>
        <label>MAPT</label>
    </interactant>
    <organismsDiffer>false</organismsDiffer>
    <experiments>2</experiments>
</comment>
<comment type="interaction">
    <interactant intactId="EBI-357085">
        <id>Q9UNE7</id>
    </interactant>
    <interactant intactId="EBI-721328">
        <id>P58340</id>
        <label>MLF1</label>
    </interactant>
    <organismsDiffer>false</organismsDiffer>
    <experiments>2</experiments>
</comment>
<comment type="interaction">
    <interactant intactId="EBI-357085">
        <id>Q9UNE7</id>
    </interactant>
    <interactant intactId="EBI-1051875">
        <id>Q15773</id>
        <label>MLF2</label>
    </interactant>
    <organismsDiffer>false</organismsDiffer>
    <experiments>4</experiments>
</comment>
<comment type="interaction">
    <interactant intactId="EBI-357085">
        <id>Q9UNE7</id>
    </interactant>
    <interactant intactId="EBI-1757866">
        <id>P00540</id>
        <label>MOS</label>
    </interactant>
    <organismsDiffer>false</organismsDiffer>
    <experiments>2</experiments>
</comment>
<comment type="interaction">
    <interactant intactId="EBI-357085">
        <id>Q9UNE7</id>
    </interactant>
    <interactant intactId="EBI-2556173">
        <id>P05164</id>
        <label>MPO</label>
    </interactant>
    <organismsDiffer>false</organismsDiffer>
    <experiments>3</experiments>
</comment>
<comment type="interaction">
    <interactant intactId="EBI-357085">
        <id>Q9UNE7</id>
    </interactant>
    <interactant intactId="EBI-2846607">
        <id>P13591</id>
        <label>NCAM1</label>
    </interactant>
    <organismsDiffer>false</organismsDiffer>
    <experiments>3</experiments>
</comment>
<comment type="interaction">
    <interactant intactId="EBI-357085">
        <id>Q9UNE7</id>
    </interactant>
    <interactant intactId="EBI-1014472">
        <id>P35240</id>
        <label>NF2</label>
    </interactant>
    <organismsDiffer>false</organismsDiffer>
    <experiments>3</experiments>
</comment>
<comment type="interaction">
    <interactant intactId="EBI-357085">
        <id>Q9UNE7</id>
    </interactant>
    <interactant intactId="EBI-1387782">
        <id>P08138</id>
        <label>NGFR</label>
    </interactant>
    <organismsDiffer>false</organismsDiffer>
    <experiments>3</experiments>
</comment>
<comment type="interaction">
    <interactant intactId="EBI-357085">
        <id>Q9UNE7</id>
    </interactant>
    <interactant intactId="EBI-10292253">
        <id>Q96PB7</id>
        <label>OLFM3</label>
    </interactant>
    <organismsDiffer>false</organismsDiffer>
    <experiments>4</experiments>
</comment>
<comment type="interaction">
    <interactant intactId="EBI-357085">
        <id>Q9UNE7</id>
    </interactant>
    <interactant intactId="EBI-12005356">
        <id>Q96PB7-3</id>
        <label>OLFM3</label>
    </interactant>
    <organismsDiffer>false</organismsDiffer>
    <experiments>3</experiments>
</comment>
<comment type="interaction">
    <interactant intactId="EBI-357085">
        <id>Q9UNE7</id>
    </interactant>
    <interactant intactId="EBI-25929070">
        <id>Q9BZ23-2</id>
        <label>PANK2</label>
    </interactant>
    <organismsDiffer>false</organismsDiffer>
    <experiments>3</experiments>
</comment>
<comment type="interaction">
    <interactant intactId="EBI-357085">
        <id>Q9UNE7</id>
    </interactant>
    <interactant intactId="EBI-25882083">
        <id>O00628-2</id>
        <label>PEX7</label>
    </interactant>
    <organismsDiffer>false</organismsDiffer>
    <experiments>3</experiments>
</comment>
<comment type="interaction">
    <interactant intactId="EBI-357085">
        <id>Q9UNE7</id>
    </interactant>
    <interactant intactId="EBI-9090282">
        <id>P27986-2</id>
        <label>PIK3R1</label>
    </interactant>
    <organismsDiffer>false</organismsDiffer>
    <experiments>3</experiments>
</comment>
<comment type="interaction">
    <interactant intactId="EBI-357085">
        <id>Q9UNE7</id>
    </interactant>
    <interactant intactId="EBI-476586">
        <id>P17612</id>
        <label>PRKACA</label>
    </interactant>
    <organismsDiffer>false</organismsDiffer>
    <experiments>3</experiments>
</comment>
<comment type="interaction">
    <interactant intactId="EBI-357085">
        <id>Q9UNE7</id>
    </interactant>
    <interactant intactId="EBI-21251460">
        <id>O60260-5</id>
        <label>PRKN</label>
    </interactant>
    <organismsDiffer>false</organismsDiffer>
    <experiments>6</experiments>
</comment>
<comment type="interaction">
    <interactant intactId="EBI-357085">
        <id>Q9UNE7</id>
    </interactant>
    <interactant intactId="EBI-1056089">
        <id>P51149</id>
        <label>RAB7A</label>
    </interactant>
    <organismsDiffer>false</organismsDiffer>
    <experiments>3</experiments>
</comment>
<comment type="interaction">
    <interactant intactId="EBI-357085">
        <id>Q9UNE7</id>
    </interactant>
    <interactant intactId="EBI-365996">
        <id>P04049</id>
        <label>RAF1</label>
    </interactant>
    <organismsDiffer>false</organismsDiffer>
    <experiments>8</experiments>
</comment>
<comment type="interaction">
    <interactant intactId="EBI-357085">
        <id>Q9UNE7</id>
    </interactant>
    <interactant intactId="EBI-356710">
        <id>Q14257</id>
        <label>RCN2</label>
    </interactant>
    <organismsDiffer>false</organismsDiffer>
    <experiments>3</experiments>
</comment>
<comment type="interaction">
    <interactant intactId="EBI-357085">
        <id>Q9UNE7</id>
    </interactant>
    <interactant intactId="EBI-9361206">
        <id>O95072</id>
        <label>REC8</label>
    </interactant>
    <organismsDiffer>false</organismsDiffer>
    <experiments>2</experiments>
</comment>
<comment type="interaction">
    <interactant intactId="EBI-357085">
        <id>Q9UNE7</id>
    </interactant>
    <interactant intactId="EBI-3918154">
        <id>Q9UGC6</id>
        <label>RGS17</label>
    </interactant>
    <organismsDiffer>false</organismsDiffer>
    <experiments>3</experiments>
</comment>
<comment type="interaction">
    <interactant intactId="EBI-357085">
        <id>Q9UNE7</id>
    </interactant>
    <interactant intactId="EBI-6257312">
        <id>Q9BVN2</id>
        <label>RUSC1</label>
    </interactant>
    <organismsDiffer>false</organismsDiffer>
    <experiments>3</experiments>
</comment>
<comment type="interaction">
    <interactant intactId="EBI-357085">
        <id>Q9UNE7</id>
    </interactant>
    <interactant intactId="EBI-10983222">
        <id>Q15019-2</id>
        <label>SEPTIN2</label>
    </interactant>
    <organismsDiffer>false</organismsDiffer>
    <experiments>3</experiments>
</comment>
<comment type="interaction">
    <interactant intactId="EBI-357085">
        <id>Q9UNE7</id>
    </interactant>
    <interactant intactId="EBI-296557">
        <id>P01011</id>
        <label>SERPINA3</label>
    </interactant>
    <organismsDiffer>false</organismsDiffer>
    <experiments>3</experiments>
</comment>
<comment type="interaction">
    <interactant intactId="EBI-357085">
        <id>Q9UNE7</id>
    </interactant>
    <interactant intactId="EBI-5235340">
        <id>Q7Z699</id>
        <label>SPRED1</label>
    </interactant>
    <organismsDiffer>false</organismsDiffer>
    <experiments>3</experiments>
</comment>
<comment type="interaction">
    <interactant intactId="EBI-357085">
        <id>Q9UNE7</id>
    </interactant>
    <interactant intactId="EBI-25912901">
        <id>O15269-2</id>
        <label>SPTLC1</label>
    </interactant>
    <organismsDiffer>false</organismsDiffer>
    <experiments>3</experiments>
</comment>
<comment type="interaction">
    <interactant intactId="EBI-357085">
        <id>Q9UNE7</id>
    </interactant>
    <interactant intactId="EBI-307104">
        <id>Q13501</id>
        <label>SQSTM1</label>
    </interactant>
    <organismsDiffer>false</organismsDiffer>
    <experiments>3</experiments>
</comment>
<comment type="interaction">
    <interactant intactId="EBI-357085">
        <id>Q9UNE7</id>
    </interactant>
    <interactant intactId="EBI-12806590">
        <id>Q86WV8</id>
        <label>TSC1</label>
    </interactant>
    <organismsDiffer>false</organismsDiffer>
    <experiments>3</experiments>
</comment>
<comment type="interaction">
    <interactant intactId="EBI-357085">
        <id>Q9UNE7</id>
    </interactant>
    <interactant intactId="EBI-2932492">
        <id>Q99757</id>
        <label>TXN2</label>
    </interactant>
    <organismsDiffer>false</organismsDiffer>
    <experiments>3</experiments>
</comment>
<comment type="interaction">
    <interactant intactId="EBI-357085">
        <id>Q9UNE7</id>
    </interactant>
    <interactant intactId="EBI-711173">
        <id>P68036</id>
        <label>UBE2L3</label>
    </interactant>
    <organismsDiffer>false</organismsDiffer>
    <experiments>3</experiments>
</comment>
<comment type="interaction">
    <interactant intactId="EBI-357085">
        <id>Q9UNE7</id>
    </interactant>
    <interactant intactId="EBI-1052908">
        <id>P61088</id>
        <label>UBE2N</label>
    </interactant>
    <organismsDiffer>false</organismsDiffer>
    <experiments>5</experiments>
</comment>
<comment type="interaction">
    <interactant intactId="EBI-357085">
        <id>Q9UNE7</id>
    </interactant>
    <interactant intactId="EBI-1783287">
        <id>Q7Z7E8</id>
        <label>UBE2Q1</label>
    </interactant>
    <organismsDiffer>false</organismsDiffer>
    <experiments>3</experiments>
</comment>
<comment type="interaction">
    <interactant intactId="EBI-357085">
        <id>Q9UNE7</id>
    </interactant>
    <interactant intactId="EBI-11141397">
        <id>Q9UBQ0-2</id>
        <label>VPS29</label>
    </interactant>
    <organismsDiffer>false</organismsDiffer>
    <experiments>3</experiments>
</comment>
<comment type="interaction">
    <interactant intactId="EBI-357085">
        <id>Q9UNE7</id>
    </interactant>
    <interactant intactId="EBI-720609">
        <id>O76024</id>
        <label>WFS1</label>
    </interactant>
    <organismsDiffer>false</organismsDiffer>
    <experiments>3</experiments>
</comment>
<comment type="interaction">
    <interactant intactId="EBI-357085">
        <id>Q9UNE7</id>
    </interactant>
    <interactant intactId="EBI-1374246">
        <id>Q5QJC9</id>
        <label>Bag5</label>
    </interactant>
    <organismsDiffer>true</organismsDiffer>
    <experiments>5</experiments>
</comment>
<comment type="interaction">
    <interactant intactId="EBI-357085">
        <id>Q9UNE7</id>
    </interactant>
    <interactant intactId="EBI-779991">
        <id>P12504</id>
        <label>vif</label>
    </interactant>
    <organismsDiffer>true</organismsDiffer>
    <experiments>2</experiments>
</comment>
<comment type="interaction">
    <interactant intactId="EBI-15687717">
        <id>Q9UNE7-1</id>
    </interactant>
    <interactant intactId="EBI-296087">
        <id>P31749</id>
        <label>AKT1</label>
    </interactant>
    <organismsDiffer>false</organismsDiffer>
    <experiments>5</experiments>
</comment>
<comment type="interaction">
    <interactant intactId="EBI-15687717">
        <id>Q9UNE7-1</id>
    </interactant>
    <interactant intactId="EBI-351908">
        <id>P11142-1</id>
        <label>HSPA8</label>
    </interactant>
    <organismsDiffer>false</organismsDiffer>
    <experiments>4</experiments>
</comment>
<comment type="interaction">
    <interactant intactId="EBI-15687717">
        <id>Q9UNE7-1</id>
    </interactant>
    <interactant intactId="EBI-5323863">
        <id>Q5S007</id>
        <label>LRRK2</label>
    </interactant>
    <organismsDiffer>false</organismsDiffer>
    <experiments>2</experiments>
</comment>
<comment type="interaction">
    <interactant intactId="EBI-15687717">
        <id>Q9UNE7-1</id>
    </interactant>
    <interactant intactId="EBI-366182">
        <id>P10636</id>
        <label>MAPT</label>
    </interactant>
    <organismsDiffer>false</organismsDiffer>
    <experiments>5</experiments>
</comment>
<comment type="subcellular location">
    <subcellularLocation>
        <location evidence="5 13 25">Cytoplasm</location>
    </subcellularLocation>
    <subcellularLocation>
        <location evidence="25">Nucleus</location>
    </subcellularLocation>
    <subcellularLocation>
        <location evidence="2">Mitochondrion</location>
    </subcellularLocation>
    <text evidence="2 25">Translocates to the nucleus in response to inflammatory signals in regulatory T-cells (Treg). Localizes to mitochondria following oxygen and glucose deprivation-induced cellular stress (By similarity).</text>
</comment>
<comment type="alternative products">
    <event type="alternative splicing"/>
    <isoform>
        <id>Q9UNE7-1</id>
        <name>1</name>
        <sequence type="displayed"/>
    </isoform>
    <isoform>
        <id>Q9UNE7-2</id>
        <name>2</name>
        <sequence type="described" ref="VSP_015947"/>
    </isoform>
</comment>
<comment type="tissue specificity">
    <text evidence="5 7 13">Expressed in differentiated myotubes (at protein level) (PubMed:17369820). Highly expressed in skeletal muscle, heart, pancreas, brain and placenta (PubMed:10330192, PubMed:11435423). Detected in kidney, liver and lung (PubMed:10330192, PubMed:11435423).</text>
</comment>
<comment type="induction">
    <text evidence="25">Up-regulated by inflammatory signals in regulatory T-cells (Treg).</text>
</comment>
<comment type="domain">
    <text evidence="3">The U-box domain is required for the ubiquitin protein ligase activity.</text>
</comment>
<comment type="domain">
    <text evidence="14">The TPR domain is essential for ubiquitination mediated by UBE2D1.</text>
</comment>
<comment type="PTM">
    <text evidence="1 3 14 22 24">Monoubiquitinated at Lys-2 following cell stress by UBE2W, promoting the interaction with ATXN3 (By similarity). Auto-ubiquitinated; mediated by UBE2D1 and UBE2D2 and enhanced in the presence of MAP2K5 (PubMed:20724525).</text>
</comment>
<comment type="disease" evidence="28 29 31 32 33">
    <disease id="DI-04081">
        <name>Spinocerebellar ataxia, autosomal recessive, 16</name>
        <acronym>SCAR16</acronym>
        <description>A form of spinocerebellar ataxia, a clinically and genetically heterogeneous group of cerebellar disorders. Patients show progressive incoordination of gait and often poor coordination of hands, speech and eye movements, due to degeneration of the cerebellum with variable involvement of the brainstem and spinal cord. SCAR16 is characterized by truncal and limb ataxia resulting in gait instability. Additionally, patients may show dysarthria, nystagmus, spasticity of the lower limbs, and mild peripheral sensory neuropathy.</description>
        <dbReference type="MIM" id="615768"/>
    </disease>
    <text>The disease is caused by variants affecting the gene represented in this entry.</text>
</comment>
<comment type="disease" evidence="41">
    <disease id="DI-05368">
        <name>Spinocerebellar ataxia 48</name>
        <acronym>SCA48</acronym>
        <description>A form of spinocerebellar ataxia, a clinically and genetically heterogeneous group of cerebellar disorders. Patients show progressive incoordination of gait and often poor coordination of hands, speech and eye movements, due to degeneration of the cerebellum with variable involvement of the brainstem and spinal cord. SCA48 is an autosomal dominant neurodegenerative disease characterized by onset in mid-adulthood of progressive cognitive decline and gait ataxia, and vermian and hemispheric cerebellar atrophy.</description>
        <dbReference type="MIM" id="618093"/>
    </disease>
    <text>The disease is caused by variants affecting the gene represented in this entry.</text>
</comment>
<comment type="miscellaneous">
    <text>Antibodies against STUB1 are found in patients with chronic lymphocytic leukemia (CLL) and in colorectal cancer patients.</text>
</comment>
<name>CHIP_HUMAN</name>
<keyword id="KW-0002">3D-structure</keyword>
<keyword id="KW-0025">Alternative splicing</keyword>
<keyword id="KW-0963">Cytoplasm</keyword>
<keyword id="KW-0903">Direct protein sequencing</keyword>
<keyword id="KW-0225">Disease variant</keyword>
<keyword id="KW-0227">DNA damage</keyword>
<keyword id="KW-0234">DNA repair</keyword>
<keyword id="KW-1017">Isopeptide bond</keyword>
<keyword id="KW-0496">Mitochondrion</keyword>
<keyword id="KW-0523">Neurodegeneration</keyword>
<keyword id="KW-0539">Nucleus</keyword>
<keyword id="KW-0597">Phosphoprotein</keyword>
<keyword id="KW-1267">Proteomics identification</keyword>
<keyword id="KW-1185">Reference proteome</keyword>
<keyword id="KW-0677">Repeat</keyword>
<keyword id="KW-0950">Spinocerebellar ataxia</keyword>
<keyword id="KW-0802">TPR repeat</keyword>
<keyword id="KW-0808">Transferase</keyword>
<keyword id="KW-0832">Ubl conjugation</keyword>
<keyword id="KW-0833">Ubl conjugation pathway</keyword>
<reference key="1">
    <citation type="journal article" date="1998" name="Int. J. Cancer">
        <title>Characterization of human colon cancer antigens recognized by autologous antibodies.</title>
        <authorList>
            <person name="Scanlan M.J."/>
            <person name="Chen Y.-T."/>
            <person name="Williamson B."/>
            <person name="Gure A.O."/>
            <person name="Stockert E."/>
            <person name="Gordan J.D."/>
            <person name="Tuereci O."/>
            <person name="Sahin U."/>
            <person name="Pfreundschuh M."/>
            <person name="Old L.J."/>
        </authorList>
    </citation>
    <scope>NUCLEOTIDE SEQUENCE [MRNA] (ISOFORM 1)</scope>
    <scope>IDENTIFICATION AS TUMOR-ASSOCIATED ANTIGEN</scope>
    <source>
        <tissue>Colon carcinoma</tissue>
    </source>
</reference>
<reference key="2">
    <citation type="journal article" date="1999" name="Mol. Cell. Biol.">
        <title>Identification of CHIP, a novel tetratricopeptide repeat-containing protein that interacts with heat shock proteins and negatively regulates chaperone functions.</title>
        <authorList>
            <person name="Ballinger C.A."/>
            <person name="Connell P."/>
            <person name="Wu Y."/>
            <person name="Hu Z."/>
            <person name="Thompson L.J."/>
            <person name="Yin L.-Y."/>
            <person name="Patterson C."/>
        </authorList>
    </citation>
    <scope>NUCLEOTIDE SEQUENCE [MRNA] (ISOFORM 1)</scope>
    <scope>FUNCTION</scope>
    <scope>INTERACTION WITH HSPA8 AND HSPA1A</scope>
    <scope>SUBCELLULAR LOCATION</scope>
    <scope>TISSUE SPECIFICITY</scope>
    <source>
        <tissue>Heart</tissue>
    </source>
</reference>
<reference key="3">
    <citation type="journal article" date="2002" name="Blood">
        <title>Identification of tumor-associated antigens in chronic lymphocytic leukemia by SEREX.</title>
        <authorList>
            <person name="Krackhardt A.M."/>
            <person name="Witzens M."/>
            <person name="Harig S."/>
            <person name="Hodi F.S."/>
            <person name="Zauls A.J."/>
            <person name="Chessia M."/>
            <person name="Barrett P."/>
            <person name="Gribben J.G."/>
        </authorList>
    </citation>
    <scope>NUCLEOTIDE SEQUENCE [MRNA] (ISOFORM 1)</scope>
    <scope>IDENTIFICATION AS TUMOR-ASSOCIATED ANTIGEN</scope>
</reference>
<reference key="4">
    <citation type="journal article" date="2001" name="Hum. Mol. Genet.">
        <title>Sequence, structure and pathology of the fully annotated terminal 2 Mb of the short arm of human chromosome 16.</title>
        <authorList>
            <person name="Daniels R.J."/>
            <person name="Peden J.F."/>
            <person name="Lloyd C."/>
            <person name="Horsley S.W."/>
            <person name="Clark K."/>
            <person name="Tufarelli C."/>
            <person name="Kearney L."/>
            <person name="Buckle V.J."/>
            <person name="Doggett N.A."/>
            <person name="Flint J."/>
            <person name="Higgs D.R."/>
        </authorList>
    </citation>
    <scope>NUCLEOTIDE SEQUENCE [GENOMIC DNA]</scope>
</reference>
<reference key="5">
    <citation type="journal article" date="2004" name="Proc. Natl. Acad. Sci. U.S.A.">
        <title>Large-scale cDNA transfection screening for genes related to cancer development and progression.</title>
        <authorList>
            <person name="Wan D."/>
            <person name="Gong Y."/>
            <person name="Qin W."/>
            <person name="Zhang P."/>
            <person name="Li J."/>
            <person name="Wei L."/>
            <person name="Zhou X."/>
            <person name="Li H."/>
            <person name="Qiu X."/>
            <person name="Zhong F."/>
            <person name="He L."/>
            <person name="Yu J."/>
            <person name="Yao G."/>
            <person name="Jiang H."/>
            <person name="Qian L."/>
            <person name="Yu Y."/>
            <person name="Shu H."/>
            <person name="Chen X."/>
            <person name="Xu H."/>
            <person name="Guo M."/>
            <person name="Pan Z."/>
            <person name="Chen Y."/>
            <person name="Ge C."/>
            <person name="Yang S."/>
            <person name="Gu J."/>
        </authorList>
    </citation>
    <scope>NUCLEOTIDE SEQUENCE [LARGE SCALE MRNA] (ISOFORM 2)</scope>
</reference>
<reference key="6">
    <citation type="journal article" date="2004" name="Nature">
        <title>The sequence and analysis of duplication-rich human chromosome 16.</title>
        <authorList>
            <person name="Martin J."/>
            <person name="Han C."/>
            <person name="Gordon L.A."/>
            <person name="Terry A."/>
            <person name="Prabhakar S."/>
            <person name="She X."/>
            <person name="Xie G."/>
            <person name="Hellsten U."/>
            <person name="Chan Y.M."/>
            <person name="Altherr M."/>
            <person name="Couronne O."/>
            <person name="Aerts A."/>
            <person name="Bajorek E."/>
            <person name="Black S."/>
            <person name="Blumer H."/>
            <person name="Branscomb E."/>
            <person name="Brown N.C."/>
            <person name="Bruno W.J."/>
            <person name="Buckingham J.M."/>
            <person name="Callen D.F."/>
            <person name="Campbell C.S."/>
            <person name="Campbell M.L."/>
            <person name="Campbell E.W."/>
            <person name="Caoile C."/>
            <person name="Challacombe J.F."/>
            <person name="Chasteen L.A."/>
            <person name="Chertkov O."/>
            <person name="Chi H.C."/>
            <person name="Christensen M."/>
            <person name="Clark L.M."/>
            <person name="Cohn J.D."/>
            <person name="Denys M."/>
            <person name="Detter J.C."/>
            <person name="Dickson M."/>
            <person name="Dimitrijevic-Bussod M."/>
            <person name="Escobar J."/>
            <person name="Fawcett J.J."/>
            <person name="Flowers D."/>
            <person name="Fotopulos D."/>
            <person name="Glavina T."/>
            <person name="Gomez M."/>
            <person name="Gonzales E."/>
            <person name="Goodstein D."/>
            <person name="Goodwin L.A."/>
            <person name="Grady D.L."/>
            <person name="Grigoriev I."/>
            <person name="Groza M."/>
            <person name="Hammon N."/>
            <person name="Hawkins T."/>
            <person name="Haydu L."/>
            <person name="Hildebrand C.E."/>
            <person name="Huang W."/>
            <person name="Israni S."/>
            <person name="Jett J."/>
            <person name="Jewett P.B."/>
            <person name="Kadner K."/>
            <person name="Kimball H."/>
            <person name="Kobayashi A."/>
            <person name="Krawczyk M.-C."/>
            <person name="Leyba T."/>
            <person name="Longmire J.L."/>
            <person name="Lopez F."/>
            <person name="Lou Y."/>
            <person name="Lowry S."/>
            <person name="Ludeman T."/>
            <person name="Manohar C.F."/>
            <person name="Mark G.A."/>
            <person name="McMurray K.L."/>
            <person name="Meincke L.J."/>
            <person name="Morgan J."/>
            <person name="Moyzis R.K."/>
            <person name="Mundt M.O."/>
            <person name="Munk A.C."/>
            <person name="Nandkeshwar R.D."/>
            <person name="Pitluck S."/>
            <person name="Pollard M."/>
            <person name="Predki P."/>
            <person name="Parson-Quintana B."/>
            <person name="Ramirez L."/>
            <person name="Rash S."/>
            <person name="Retterer J."/>
            <person name="Ricke D.O."/>
            <person name="Robinson D.L."/>
            <person name="Rodriguez A."/>
            <person name="Salamov A."/>
            <person name="Saunders E.H."/>
            <person name="Scott D."/>
            <person name="Shough T."/>
            <person name="Stallings R.L."/>
            <person name="Stalvey M."/>
            <person name="Sutherland R.D."/>
            <person name="Tapia R."/>
            <person name="Tesmer J.G."/>
            <person name="Thayer N."/>
            <person name="Thompson L.S."/>
            <person name="Tice H."/>
            <person name="Torney D.C."/>
            <person name="Tran-Gyamfi M."/>
            <person name="Tsai M."/>
            <person name="Ulanovsky L.E."/>
            <person name="Ustaszewska A."/>
            <person name="Vo N."/>
            <person name="White P.S."/>
            <person name="Williams A.L."/>
            <person name="Wills P.L."/>
            <person name="Wu J.-R."/>
            <person name="Wu K."/>
            <person name="Yang J."/>
            <person name="DeJong P."/>
            <person name="Bruce D."/>
            <person name="Doggett N.A."/>
            <person name="Deaven L."/>
            <person name="Schmutz J."/>
            <person name="Grimwood J."/>
            <person name="Richardson P."/>
            <person name="Rokhsar D.S."/>
            <person name="Eichler E.E."/>
            <person name="Gilna P."/>
            <person name="Lucas S.M."/>
            <person name="Myers R.M."/>
            <person name="Rubin E.M."/>
            <person name="Pennacchio L.A."/>
        </authorList>
    </citation>
    <scope>NUCLEOTIDE SEQUENCE [LARGE SCALE GENOMIC DNA]</scope>
</reference>
<reference key="7">
    <citation type="submission" date="2005-09" db="EMBL/GenBank/DDBJ databases">
        <authorList>
            <person name="Mural R.J."/>
            <person name="Istrail S."/>
            <person name="Sutton G.G."/>
            <person name="Florea L."/>
            <person name="Halpern A.L."/>
            <person name="Mobarry C.M."/>
            <person name="Lippert R."/>
            <person name="Walenz B."/>
            <person name="Shatkay H."/>
            <person name="Dew I."/>
            <person name="Miller J.R."/>
            <person name="Flanigan M.J."/>
            <person name="Edwards N.J."/>
            <person name="Bolanos R."/>
            <person name="Fasulo D."/>
            <person name="Halldorsson B.V."/>
            <person name="Hannenhalli S."/>
            <person name="Turner R."/>
            <person name="Yooseph S."/>
            <person name="Lu F."/>
            <person name="Nusskern D.R."/>
            <person name="Shue B.C."/>
            <person name="Zheng X.H."/>
            <person name="Zhong F."/>
            <person name="Delcher A.L."/>
            <person name="Huson D.H."/>
            <person name="Kravitz S.A."/>
            <person name="Mouchard L."/>
            <person name="Reinert K."/>
            <person name="Remington K.A."/>
            <person name="Clark A.G."/>
            <person name="Waterman M.S."/>
            <person name="Eichler E.E."/>
            <person name="Adams M.D."/>
            <person name="Hunkapiller M.W."/>
            <person name="Myers E.W."/>
            <person name="Venter J.C."/>
        </authorList>
    </citation>
    <scope>NUCLEOTIDE SEQUENCE [LARGE SCALE GENOMIC DNA]</scope>
</reference>
<reference key="8">
    <citation type="journal article" date="2004" name="Genome Res.">
        <title>The status, quality, and expansion of the NIH full-length cDNA project: the Mammalian Gene Collection (MGC).</title>
        <authorList>
            <consortium name="The MGC Project Team"/>
        </authorList>
    </citation>
    <scope>NUCLEOTIDE SEQUENCE [LARGE SCALE MRNA] (ISOFORM 1)</scope>
    <source>
        <tissue>Colon</tissue>
        <tissue>Skin</tissue>
    </source>
</reference>
<reference key="9">
    <citation type="submission" date="2009-03" db="UniProtKB">
        <authorList>
            <person name="Bienvenut W.V."/>
            <person name="Waridel P."/>
            <person name="Quadroni M."/>
        </authorList>
    </citation>
    <scope>PROTEIN SEQUENCE OF 13-30; 56-66; 86-119; 129-140; 155-167; 235-241; 256-263 AND 273-287</scope>
    <scope>PHOSPHORYLATION AT SER-19</scope>
    <scope>IDENTIFICATION BY MASS SPECTROMETRY</scope>
    <source>
        <tissue>Embryonic kidney</tissue>
    </source>
</reference>
<reference key="10">
    <citation type="journal article" date="2001" name="J. Biol. Chem.">
        <title>U box proteins as a new family of ubiquitin-protein ligases.</title>
        <authorList>
            <person name="Hatakeyama S."/>
            <person name="Yada M."/>
            <person name="Matsumoto M."/>
            <person name="Ishida N."/>
            <person name="Nakayama K.I."/>
        </authorList>
    </citation>
    <scope>TISSUE SPECIFICITY</scope>
</reference>
<reference key="11">
    <citation type="journal article" date="2001" name="J. Biol. Chem.">
        <title>CHIP is a U-box-dependent E3 ubiquitin ligase: identification of Hsc70 as a target for ubiquitylation.</title>
        <authorList>
            <person name="Jiang J."/>
            <person name="Ballinger C.A."/>
            <person name="Wu Y."/>
            <person name="Dai Q."/>
            <person name="Cyr D.M."/>
            <person name="Hoehfeld J."/>
            <person name="Patterson C."/>
        </authorList>
    </citation>
    <scope>FUNCTION</scope>
    <scope>CATALYTIC ACTIVITY</scope>
    <scope>PATHWAY</scope>
    <scope>INTERACTION WITH HSPA8; UBE2D1; UBE2D2 AND UBE2D3</scope>
</reference>
<reference key="12">
    <citation type="journal article" date="2001" name="Nat. Cell Biol.">
        <title>The co-chaperone CHIP regulates protein triage decisions mediated by heat-shock proteins.</title>
        <authorList>
            <person name="Connell P."/>
            <person name="Ballinger C.A."/>
            <person name="Jiang J."/>
            <person name="Wu Y."/>
            <person name="Thompson L.J."/>
            <person name="Hoehfeld J."/>
            <person name="Patterson C."/>
        </authorList>
    </citation>
    <scope>FUNCTION</scope>
    <scope>INTERACTION WITH HSP90</scope>
</reference>
<reference key="13">
    <citation type="journal article" date="2004" name="J. Biol. Chem.">
        <title>Ubiquitylation of neuronal nitric-oxide synthase by CHIP, a chaperone-dependent E3 ligase.</title>
        <authorList>
            <person name="Peng H.M."/>
            <person name="Morishima Y."/>
            <person name="Jenkins G.J."/>
            <person name="Dunbar A.Y."/>
            <person name="Lau M."/>
            <person name="Patterson C."/>
            <person name="Pratt W.B."/>
            <person name="Osawa Y."/>
        </authorList>
    </citation>
    <scope>FUNCTION</scope>
    <scope>CATALYTIC ACTIVITY</scope>
    <scope>PATHWAY</scope>
</reference>
<reference key="14">
    <citation type="journal article" date="2004" name="Mol. Biol. Cell">
        <title>The cochaperone HspBP1 inhibits the CHIP ubiquitin ligase and stimulates the maturation of the cystic fibrosis transmembrane conductance regulator.</title>
        <authorList>
            <person name="Alberti S."/>
            <person name="Boehse K."/>
            <person name="Arndt V."/>
            <person name="Schmitz A."/>
            <person name="Hoehfeld J."/>
        </authorList>
    </citation>
    <scope>INTERACTION WITH HSPA1A AND HSPBP1</scope>
</reference>
<reference key="15">
    <citation type="journal article" date="2005" name="J. Biol. Chem.">
        <title>Regulation of the cytoplasmic quality control protein degradation pathway by BAG2.</title>
        <authorList>
            <person name="Dai Q."/>
            <person name="Qian S.B."/>
            <person name="Li H.-H."/>
            <person name="McDonough H."/>
            <person name="Borchers C."/>
            <person name="Huang D."/>
            <person name="Takayama S."/>
            <person name="Younger J.M."/>
            <person name="Ren H.Y."/>
            <person name="Cyr D.M."/>
            <person name="Patterson C."/>
        </authorList>
    </citation>
    <scope>INTERACTION WITH BAG2</scope>
</reference>
<reference key="16">
    <citation type="journal article" date="2005" name="Mol. Cell">
        <title>Chaperoned ubiquitylation -- crystal structures of the CHIP U box E3 ubiquitin ligase and a CHIP-Ubc13-Uev1a complex.</title>
        <authorList>
            <person name="Zhang M."/>
            <person name="Windheim M."/>
            <person name="Roe S.M."/>
            <person name="Peggie M."/>
            <person name="Cohen P."/>
            <person name="Prodromou C."/>
            <person name="Pearl L.H."/>
        </authorList>
    </citation>
    <scope>INTERACTION WITH UBE2N AND UBE2V1</scope>
</reference>
<reference key="17">
    <citation type="journal article" date="2006" name="Cell">
        <title>Global, in vivo, and site-specific phosphorylation dynamics in signaling networks.</title>
        <authorList>
            <person name="Olsen J.V."/>
            <person name="Blagoev B."/>
            <person name="Gnad F."/>
            <person name="Macek B."/>
            <person name="Kumar C."/>
            <person name="Mortensen P."/>
            <person name="Mann M."/>
        </authorList>
    </citation>
    <scope>PHOSPHORYLATION [LARGE SCALE ANALYSIS] AT SER-19</scope>
    <scope>IDENTIFICATION BY MASS SPECTROMETRY [LARGE SCALE ANALYSIS]</scope>
    <source>
        <tissue>Cervix carcinoma</tissue>
    </source>
</reference>
<reference key="18">
    <citation type="journal article" date="2007" name="Nat. Cell Biol.">
        <title>The ubiquitin-selective chaperone CDC-48/p97 links myosin assembly to human myopathy.</title>
        <authorList>
            <person name="Janiesch P.C."/>
            <person name="Kim J."/>
            <person name="Mouysset J."/>
            <person name="Barikbin R."/>
            <person name="Lochmueller H."/>
            <person name="Cassata G."/>
            <person name="Krause S."/>
            <person name="Hoppe T."/>
        </authorList>
    </citation>
    <scope>FUNCTION</scope>
    <scope>INTERACTION WITH UBE4B</scope>
    <scope>SUBCELLULAR LOCATION</scope>
    <scope>TISSUE SPECIFICITY</scope>
</reference>
<reference key="19">
    <citation type="journal article" date="2008" name="Biochem. J.">
        <title>Two different classes of E2 ubiquitin-conjugating enzymes are required for the mono-ubiquitination of proteins and elongation by polyubiquitin chains with a specific topology.</title>
        <authorList>
            <person name="Windheim M."/>
            <person name="Peggie M."/>
            <person name="Cohen P."/>
        </authorList>
    </citation>
    <scope>POLYUBIQUITINATION AT LYS-22; LYS-221 AND LYS-255</scope>
    <scope>DOMAIN TPR</scope>
</reference>
<reference key="20">
    <citation type="journal article" date="2008" name="Mol. Biol. Cell">
        <title>MKKS is a centrosome-shuttling protein degraded by disease-causing mutations via CHIP-mediated ubiquitination.</title>
        <authorList>
            <person name="Hirayama S."/>
            <person name="Yamazaki Y."/>
            <person name="Kitamura A."/>
            <person name="Oda Y."/>
            <person name="Morito D."/>
            <person name="Okawa K."/>
            <person name="Kimura H."/>
            <person name="Cyr D.M."/>
            <person name="Kubota H."/>
            <person name="Nagata K."/>
        </authorList>
    </citation>
    <scope>INTERACTION WITH MKKS</scope>
</reference>
<reference key="21">
    <citation type="journal article" date="2008" name="Mol. Cell">
        <title>Kinase-selective enrichment enables quantitative phosphoproteomics of the kinome across the cell cycle.</title>
        <authorList>
            <person name="Daub H."/>
            <person name="Olsen J.V."/>
            <person name="Bairlein M."/>
            <person name="Gnad F."/>
            <person name="Oppermann F.S."/>
            <person name="Korner R."/>
            <person name="Greff Z."/>
            <person name="Keri G."/>
            <person name="Stemmann O."/>
            <person name="Mann M."/>
        </authorList>
    </citation>
    <scope>PHOSPHORYLATION [LARGE SCALE ANALYSIS] AT SER-19</scope>
    <scope>IDENTIFICATION BY MASS SPECTROMETRY [LARGE SCALE ANALYSIS]</scope>
    <source>
        <tissue>Cervix carcinoma</tissue>
    </source>
</reference>
<reference key="22">
    <citation type="journal article" date="2008" name="Proc. Natl. Acad. Sci. U.S.A.">
        <title>A quantitative atlas of mitotic phosphorylation.</title>
        <authorList>
            <person name="Dephoure N."/>
            <person name="Zhou C."/>
            <person name="Villen J."/>
            <person name="Beausoleil S.A."/>
            <person name="Bakalarski C.E."/>
            <person name="Elledge S.J."/>
            <person name="Gygi S.P."/>
        </authorList>
    </citation>
    <scope>PHOSPHORYLATION [LARGE SCALE ANALYSIS] AT SER-19; SER-23 AND SER-273</scope>
    <scope>IDENTIFICATION BY MASS SPECTROMETRY [LARGE SCALE ANALYSIS]</scope>
    <source>
        <tissue>Cervix carcinoma</tissue>
    </source>
</reference>
<reference key="23">
    <citation type="journal article" date="2009" name="Anal. Chem.">
        <title>Lys-N and trypsin cover complementary parts of the phosphoproteome in a refined SCX-based approach.</title>
        <authorList>
            <person name="Gauci S."/>
            <person name="Helbig A.O."/>
            <person name="Slijper M."/>
            <person name="Krijgsveld J."/>
            <person name="Heck A.J."/>
            <person name="Mohammed S."/>
        </authorList>
    </citation>
    <scope>IDENTIFICATION BY MASS SPECTROMETRY [LARGE SCALE ANALYSIS]</scope>
</reference>
<reference key="24">
    <citation type="journal article" date="2009" name="Arch. Biochem. Biophys.">
        <title>CYP3A4 ubiquitination by gp78 (the tumor autocrine motility factor receptor, AMFR) and CHIP E3 ligases.</title>
        <authorList>
            <person name="Pabarcus M.K."/>
            <person name="Hoe N."/>
            <person name="Sadeghi S."/>
            <person name="Patterson C."/>
            <person name="Wiertz E."/>
            <person name="Correia M.A."/>
        </authorList>
    </citation>
    <scope>FUNCTION</scope>
</reference>
<reference key="25">
    <citation type="journal article" date="2009" name="EMBO J.">
        <title>Ubiquitin ligase ARF-BP1/Mule modulates base excision repair.</title>
        <authorList>
            <person name="Parsons J.L."/>
            <person name="Tait P.S."/>
            <person name="Finch D."/>
            <person name="Dianova I.I."/>
            <person name="Edelmann M.J."/>
            <person name="Khoronenkova S.V."/>
            <person name="Kessler B.M."/>
            <person name="Sharma R.A."/>
            <person name="McKenna W.G."/>
            <person name="Dianov G.L."/>
        </authorList>
    </citation>
    <scope>FUNCTION</scope>
    <scope>INTERACTION WITH POLB</scope>
</reference>
<reference key="26">
    <citation type="journal article" date="2009" name="Hum. Mol. Genet.">
        <title>Functional interaction of DYX1C1 with estrogen receptors suggests involvement of hormonal pathways in dyslexia.</title>
        <authorList>
            <person name="Massinen S."/>
            <person name="Tammimies K."/>
            <person name="Tapia-Paez I."/>
            <person name="Matsson H."/>
            <person name="Hokkanen M.E."/>
            <person name="Soederberg O."/>
            <person name="Landegren U."/>
            <person name="Castren E."/>
            <person name="Gustafsson J.A."/>
            <person name="Treuter E."/>
            <person name="Kere J."/>
        </authorList>
    </citation>
    <scope>INTERACTION WITH DNAAF4</scope>
</reference>
<reference key="27">
    <citation type="journal article" date="2009" name="J. Biol. Chem.">
        <title>C terminus of Hsc70-interacting protein promotes smooth muscle cell proliferation and survival through ubiquitin-mediated degradation of FoxO1.</title>
        <authorList>
            <person name="Li F."/>
            <person name="Xie P."/>
            <person name="Fan Y."/>
            <person name="Zhang H."/>
            <person name="Zheng L."/>
            <person name="Gu D."/>
            <person name="Patterson C."/>
            <person name="Li H."/>
        </authorList>
    </citation>
    <scope>FUNCTION</scope>
    <scope>INTERACTION WITH FOXO1</scope>
</reference>
<reference key="28">
    <citation type="journal article" date="2009" name="Mol. Cancer Res.">
        <title>Hsp90 is an essential regulator of EphA2 receptor stability and signaling: implications for cancer cell migration and metastasis.</title>
        <authorList>
            <person name="Annamalai B."/>
            <person name="Liu X."/>
            <person name="Gopal U."/>
            <person name="Isaacs J.S."/>
        </authorList>
    </citation>
    <scope>FUNCTION</scope>
</reference>
<reference key="29">
    <citation type="journal article" date="2009" name="Mol. Cell. Proteomics">
        <title>Large-scale proteomics analysis of the human kinome.</title>
        <authorList>
            <person name="Oppermann F.S."/>
            <person name="Gnad F."/>
            <person name="Olsen J.V."/>
            <person name="Hornberger R."/>
            <person name="Greff Z."/>
            <person name="Keri G."/>
            <person name="Mann M."/>
            <person name="Daub H."/>
        </authorList>
    </citation>
    <scope>IDENTIFICATION BY MASS SPECTROMETRY [LARGE SCALE ANALYSIS]</scope>
</reference>
<reference key="30">
    <citation type="journal article" date="2009" name="Sci. Signal.">
        <title>Quantitative phosphoproteomic analysis of T cell receptor signaling reveals system-wide modulation of protein-protein interactions.</title>
        <authorList>
            <person name="Mayya V."/>
            <person name="Lundgren D.H."/>
            <person name="Hwang S.-I."/>
            <person name="Rezaul K."/>
            <person name="Wu L."/>
            <person name="Eng J.K."/>
            <person name="Rodionov V."/>
            <person name="Han D.K."/>
        </authorList>
    </citation>
    <scope>PHOSPHORYLATION [LARGE SCALE ANALYSIS] AT SER-19</scope>
    <scope>IDENTIFICATION BY MASS SPECTROMETRY [LARGE SCALE ANALYSIS]</scope>
    <source>
        <tissue>Leukemic T-cell</tissue>
    </source>
</reference>
<reference key="31">
    <citation type="journal article" date="2010" name="FASEB J.">
        <title>Novel role of C terminus of Hsc70-interacting protein (CHIP) ubiquitin ligase on inhibiting cardiac apoptosis and dysfunction via regulating ERK5-mediated degradation of inducible cAMP early repressor.</title>
        <authorList>
            <person name="Woo C.H."/>
            <person name="Le N.T."/>
            <person name="Shishido T."/>
            <person name="Chang E."/>
            <person name="Lee H."/>
            <person name="Heo K.S."/>
            <person name="Mickelsen D.M."/>
            <person name="Lu Y."/>
            <person name="McClain C."/>
            <person name="Spangenberg T."/>
            <person name="Yan C."/>
            <person name="Molina C.A."/>
            <person name="Yang J."/>
            <person name="Patterson C."/>
            <person name="Abe J."/>
        </authorList>
    </citation>
    <scope>FUNCTION</scope>
    <scope>INTERACTION WITH MAPK7</scope>
    <scope>UBIQUITINATION</scope>
    <scope>MUTAGENESIS OF HIS-260</scope>
</reference>
<reference key="32">
    <citation type="journal article" date="2010" name="Curr. Biol.">
        <title>Chaperone-assisted selective autophagy is essential for muscle maintenance.</title>
        <authorList>
            <person name="Arndt V."/>
            <person name="Dick N."/>
            <person name="Tawo R."/>
            <person name="Dreiseidler M."/>
            <person name="Wenzel D."/>
            <person name="Hesse M."/>
            <person name="Fuerst D.O."/>
            <person name="Saftig P."/>
            <person name="Saint R."/>
            <person name="Fleischmann B.K."/>
            <person name="Hoch M."/>
            <person name="Hoehfeld J."/>
        </authorList>
    </citation>
    <scope>INTERACTION WITH BAG3; HSPA8 AND HSPB8 IN CASA COMPLEX</scope>
</reference>
<reference key="33">
    <citation type="journal article" date="2010" name="Sci. Signal.">
        <title>Quantitative phosphoproteomics reveals widespread full phosphorylation site occupancy during mitosis.</title>
        <authorList>
            <person name="Olsen J.V."/>
            <person name="Vermeulen M."/>
            <person name="Santamaria A."/>
            <person name="Kumar C."/>
            <person name="Miller M.L."/>
            <person name="Jensen L.J."/>
            <person name="Gnad F."/>
            <person name="Cox J."/>
            <person name="Jensen T.S."/>
            <person name="Nigg E.A."/>
            <person name="Brunak S."/>
            <person name="Mann M."/>
        </authorList>
    </citation>
    <scope>PHOSPHORYLATION [LARGE SCALE ANALYSIS] AT SER-19 AND SER-273</scope>
    <scope>IDENTIFICATION BY MASS SPECTROMETRY [LARGE SCALE ANALYSIS]</scope>
    <source>
        <tissue>Cervix carcinoma</tissue>
    </source>
</reference>
<reference key="34">
    <citation type="journal article" date="2011" name="BMC Syst. Biol.">
        <title>Initial characterization of the human central proteome.</title>
        <authorList>
            <person name="Burkard T.R."/>
            <person name="Planyavsky M."/>
            <person name="Kaupe I."/>
            <person name="Breitwieser F.P."/>
            <person name="Buerckstuemmer T."/>
            <person name="Bennett K.L."/>
            <person name="Superti-Furga G."/>
            <person name="Colinge J."/>
        </authorList>
    </citation>
    <scope>IDENTIFICATION BY MASS SPECTROMETRY [LARGE SCALE ANALYSIS]</scope>
</reference>
<reference key="35">
    <citation type="journal article" date="2011" name="Sci. Signal.">
        <title>System-wide temporal characterization of the proteome and phosphoproteome of human embryonic stem cell differentiation.</title>
        <authorList>
            <person name="Rigbolt K.T."/>
            <person name="Prokhorova T.A."/>
            <person name="Akimov V."/>
            <person name="Henningsen J."/>
            <person name="Johansen P.T."/>
            <person name="Kratchmarova I."/>
            <person name="Kassem M."/>
            <person name="Mann M."/>
            <person name="Olsen J.V."/>
            <person name="Blagoev B."/>
        </authorList>
    </citation>
    <scope>PHOSPHORYLATION [LARGE SCALE ANALYSIS] AT SER-19 AND SER-23</scope>
    <scope>IDENTIFICATION BY MASS SPECTROMETRY [LARGE SCALE ANALYSIS]</scope>
</reference>
<reference key="36">
    <citation type="journal article" date="2012" name="Nat. Genet.">
        <title>Mutations affecting the cytoplasmic functions of the co-chaperone DNAJB6 cause limb-girdle muscular dystrophy.</title>
        <authorList>
            <person name="Sarparanta J."/>
            <person name="Jonson P.H."/>
            <person name="Golzio C."/>
            <person name="Sandell S."/>
            <person name="Luque H."/>
            <person name="Screen M."/>
            <person name="McDonald K."/>
            <person name="Stajich J.M."/>
            <person name="Mahjneh I."/>
            <person name="Vihola A."/>
            <person name="Raheem O."/>
            <person name="Penttila S."/>
            <person name="Lehtinen S."/>
            <person name="Huovinen S."/>
            <person name="Palmio J."/>
            <person name="Tasca G."/>
            <person name="Ricci E."/>
            <person name="Hackman P."/>
            <person name="Hauser M."/>
            <person name="Katsanis N."/>
            <person name="Udd B."/>
        </authorList>
    </citation>
    <scope>INTERACTION WITH DNAJB6</scope>
</reference>
<reference key="37">
    <citation type="journal article" date="2012" name="Proc. Natl. Acad. Sci. U.S.A.">
        <title>N-terminal acetylome analyses and functional insights of the N-terminal acetyltransferase NatB.</title>
        <authorList>
            <person name="Van Damme P."/>
            <person name="Lasa M."/>
            <person name="Polevoda B."/>
            <person name="Gazquez C."/>
            <person name="Elosegui-Artola A."/>
            <person name="Kim D.S."/>
            <person name="De Juan-Pardo E."/>
            <person name="Demeyer K."/>
            <person name="Hole K."/>
            <person name="Larrea E."/>
            <person name="Timmerman E."/>
            <person name="Prieto J."/>
            <person name="Arnesen T."/>
            <person name="Sherman F."/>
            <person name="Gevaert K."/>
            <person name="Aldabe R."/>
        </authorList>
    </citation>
    <scope>IDENTIFICATION BY MASS SPECTROMETRY [LARGE SCALE ANALYSIS]</scope>
</reference>
<reference key="38">
    <citation type="journal article" date="2013" name="Biochem. J.">
        <title>Ube2W conjugates ubiquitin to alpha-amino groups of protein N-termini.</title>
        <authorList>
            <person name="Tatham M.H."/>
            <person name="Plechanovova A."/>
            <person name="Jaffray E.G."/>
            <person name="Salmen H."/>
            <person name="Hay R.T."/>
        </authorList>
    </citation>
    <scope>UBIQUITINATION AT LYS-2</scope>
</reference>
<reference key="39">
    <citation type="journal article" date="2013" name="Immunity">
        <title>The ubiquitin ligase Stub1 negatively modulates regulatory T cell suppressive activity by promoting degradation of the transcription factor Foxp3.</title>
        <authorList>
            <person name="Chen Z."/>
            <person name="Barbi J."/>
            <person name="Bu S."/>
            <person name="Yang H.Y."/>
            <person name="Li Z."/>
            <person name="Gao Y."/>
            <person name="Jinasena D."/>
            <person name="Fu J."/>
            <person name="Lin F."/>
            <person name="Chen C."/>
            <person name="Zhang J."/>
            <person name="Yu N."/>
            <person name="Li X."/>
            <person name="Shan Z."/>
            <person name="Nie J."/>
            <person name="Gao Z."/>
            <person name="Tian H."/>
            <person name="Li Y."/>
            <person name="Yao Z."/>
            <person name="Zheng Y."/>
            <person name="Park B.V."/>
            <person name="Pan Z."/>
            <person name="Zhang J."/>
            <person name="Dang E."/>
            <person name="Li Z."/>
            <person name="Wang H."/>
            <person name="Luo W."/>
            <person name="Li L."/>
            <person name="Semenza G.L."/>
            <person name="Zheng S.G."/>
            <person name="Loser K."/>
            <person name="Tsun A."/>
            <person name="Greene M.I."/>
            <person name="Pardoll D.M."/>
            <person name="Pan F."/>
            <person name="Li B."/>
        </authorList>
    </citation>
    <scope>FUNCTION</scope>
    <scope>INDUCTION</scope>
    <scope>SUBCELLULAR LOCATION</scope>
    <scope>MUTAGENESIS OF LYS-30 AND HIS-260</scope>
</reference>
<reference key="40">
    <citation type="journal article" date="2013" name="J. Biol. Chem.">
        <title>Endoplasmic reticulum protein quality control is determined by cooperative interactions between Hsp/c70 protein and the CHIP E3 ligase.</title>
        <authorList>
            <person name="Matsumura Y."/>
            <person name="Sakai J."/>
            <person name="Skach W.R."/>
        </authorList>
    </citation>
    <scope>FUNCTION</scope>
    <scope>INTERACTION WITH HSPA8</scope>
    <scope>MUTAGENESIS OF PRO-269</scope>
</reference>
<reference key="41">
    <citation type="journal article" date="2013" name="J. Proteome Res.">
        <title>Toward a comprehensive characterization of a human cancer cell phosphoproteome.</title>
        <authorList>
            <person name="Zhou H."/>
            <person name="Di Palma S."/>
            <person name="Preisinger C."/>
            <person name="Peng M."/>
            <person name="Polat A.N."/>
            <person name="Heck A.J."/>
            <person name="Mohammed S."/>
        </authorList>
    </citation>
    <scope>PHOSPHORYLATION [LARGE SCALE ANALYSIS] AT SER-19; SER-23; SER-25 AND SER-149</scope>
    <scope>IDENTIFICATION BY MASS SPECTROMETRY [LARGE SCALE ANALYSIS]</scope>
    <source>
        <tissue>Cervix carcinoma</tissue>
        <tissue>Erythroleukemia</tissue>
    </source>
</reference>
<reference key="42">
    <citation type="journal article" date="2013" name="Mol. Cell. Biol.">
        <title>The ubiquitin ligase CHIP prevents SirT6 degradation through noncanonical ubiquitination.</title>
        <authorList>
            <person name="Ronnebaum S.M."/>
            <person name="Wu Y."/>
            <person name="McDonough H."/>
            <person name="Patterson C."/>
        </authorList>
    </citation>
    <scope>FUNCTION</scope>
    <scope>CATALYTIC ACTIVITY</scope>
    <scope>MUTAGENESIS OF HIS-260</scope>
</reference>
<reference key="43">
    <citation type="journal article" date="2014" name="Biochem. Biophys. Res. Commun.">
        <title>Hsp70 and Hsp90 oppositely regulate TGF-beta signaling through CHIP/Stub1.</title>
        <authorList>
            <person name="Shang Y."/>
            <person name="Xu X."/>
            <person name="Duan X."/>
            <person name="Guo J."/>
            <person name="Wang Y."/>
            <person name="Ren F."/>
            <person name="He D."/>
            <person name="Chang Z."/>
        </authorList>
    </citation>
    <scope>FUNCTION</scope>
    <scope>INTERACTION WITH SMAD3; HSPA1A; HSPA1B; HSP90AA1 AND HSP90AB1</scope>
</reference>
<reference key="44">
    <citation type="journal article" date="2014" name="J. Proteomics">
        <title>An enzyme assisted RP-RPLC approach for in-depth analysis of human liver phosphoproteome.</title>
        <authorList>
            <person name="Bian Y."/>
            <person name="Song C."/>
            <person name="Cheng K."/>
            <person name="Dong M."/>
            <person name="Wang F."/>
            <person name="Huang J."/>
            <person name="Sun D."/>
            <person name="Wang L."/>
            <person name="Ye M."/>
            <person name="Zou H."/>
        </authorList>
    </citation>
    <scope>PHOSPHORYLATION [LARGE SCALE ANALYSIS] AT SER-19</scope>
    <scope>IDENTIFICATION BY MASS SPECTROMETRY [LARGE SCALE ANALYSIS]</scope>
    <source>
        <tissue>Liver</tissue>
    </source>
</reference>
<reference key="45">
    <citation type="journal article" date="2015" name="Biochem. Pharmacol.">
        <title>UBXN2A regulates nicotinic receptor degradation by modulating the E3 ligase activity of CHIP.</title>
        <authorList>
            <person name="Teng Y."/>
            <person name="Rezvani K."/>
            <person name="De Biasi M."/>
        </authorList>
    </citation>
    <scope>FUNCTION</scope>
    <scope>IDENTIFICATION IN A COMPLEX WITH UBXN2A; VCP AND CHRNA3</scope>
    <scope>MUTAGENESIS OF HIS-260</scope>
</reference>
<reference key="46">
    <citation type="journal article" date="2015" name="Proteomics">
        <title>N-terminome analysis of the human mitochondrial proteome.</title>
        <authorList>
            <person name="Vaca Jacome A.S."/>
            <person name="Rabilloud T."/>
            <person name="Schaeffer-Reiss C."/>
            <person name="Rompais M."/>
            <person name="Ayoub D."/>
            <person name="Lane L."/>
            <person name="Bairoch A."/>
            <person name="Van Dorsselaer A."/>
            <person name="Carapito C."/>
        </authorList>
    </citation>
    <scope>IDENTIFICATION BY MASS SPECTROMETRY [LARGE SCALE ANALYSIS]</scope>
</reference>
<reference key="47">
    <citation type="journal article" date="2016" name="Cell Stress Chaperones">
        <title>Structural studies of UBXN2A and mortalin interaction and the putative role of silenced UBXN2A in preventing response to chemotherapy.</title>
        <authorList>
            <person name="Sane S."/>
            <person name="Abdullah A."/>
            <person name="Nelson M.E."/>
            <person name="Wang H."/>
            <person name="Chauhan S.C."/>
            <person name="Newton S.S."/>
            <person name="Rezvani K."/>
        </authorList>
    </citation>
    <scope>FUNCTION</scope>
</reference>
<reference key="48">
    <citation type="journal article" date="2016" name="Nat. Commun.">
        <title>The FNIP co-chaperones decelerate the Hsp90 chaperone cycle and enhance drug binding.</title>
        <authorList>
            <person name="Woodford M.R."/>
            <person name="Dunn D.M."/>
            <person name="Blanden A.R."/>
            <person name="Capriotti D."/>
            <person name="Loiselle D."/>
            <person name="Prodromou C."/>
            <person name="Panaretou B."/>
            <person name="Hughes P.F."/>
            <person name="Smith A."/>
            <person name="Ackerman W."/>
            <person name="Haystead T.A."/>
            <person name="Loh S.N."/>
            <person name="Bourboulia D."/>
            <person name="Schmidt L.S."/>
            <person name="Marston Linehan W."/>
            <person name="Bratslavsky G."/>
            <person name="Mollapour M."/>
        </authorList>
    </citation>
    <scope>INTERACTION WITH FLCN AND HSP90AA1</scope>
</reference>
<reference key="49">
    <citation type="journal article" date="2016" name="Nat. Commun.">
        <title>ARD1-mediated Hsp70 acetylation balances stress-induced protein refolding and degradation.</title>
        <authorList>
            <person name="Seo J.H."/>
            <person name="Park J.H."/>
            <person name="Lee E.J."/>
            <person name="Vo T.T."/>
            <person name="Choi H."/>
            <person name="Kim J.Y."/>
            <person name="Jang J.K."/>
            <person name="Wee H.J."/>
            <person name="Lee H.S."/>
            <person name="Jang S.H."/>
            <person name="Park Z.Y."/>
            <person name="Jeong J."/>
            <person name="Lee K.J."/>
            <person name="Seok S.H."/>
            <person name="Park J.Y."/>
            <person name="Lee B.J."/>
            <person name="Lee M.N."/>
            <person name="Oh G.T."/>
            <person name="Kim K.W."/>
        </authorList>
    </citation>
    <scope>FUNCTION</scope>
    <scope>INTERACTION WITH HSPA1A; HSPA1B AND HSPA8</scope>
</reference>
<reference key="50">
    <citation type="journal article" date="2017" name="Nature">
        <title>Identification of CMTM6 and CMTM4 as PD-L1 protein regulators.</title>
        <authorList>
            <person name="Mezzadra R."/>
            <person name="Sun C."/>
            <person name="Jae L.T."/>
            <person name="Gomez-Eerland R."/>
            <person name="de Vries E."/>
            <person name="Wu W."/>
            <person name="Logtenberg M.E.W."/>
            <person name="Slagter M."/>
            <person name="Rozeman E.A."/>
            <person name="Hofland I."/>
            <person name="Broeks A."/>
            <person name="Horlings H.M."/>
            <person name="Wessels L.F.A."/>
            <person name="Blank C.U."/>
            <person name="Xiao Y."/>
            <person name="Heck A.J.R."/>
            <person name="Borst J."/>
            <person name="Brummelkamp T.R."/>
            <person name="Schumacher T.N.M."/>
        </authorList>
    </citation>
    <scope>FUNCTION</scope>
</reference>
<reference key="51">
    <citation type="journal article" date="2018" name="J. Neurosci.">
        <title>Neuronal Preconditioning Requires the Mitophagic Activity of C-terminus of HSC70-Interacting Protein.</title>
        <authorList>
            <person name="Lizama B.N."/>
            <person name="Palubinsky A.M."/>
            <person name="Raveendran V.A."/>
            <person name="Moore A.M."/>
            <person name="Federspiel J.D."/>
            <person name="Codreanu S.G."/>
            <person name="Liebler D.C."/>
            <person name="McLaughlin B."/>
        </authorList>
    </citation>
    <scope>MUTAGENESIS OF LYS-30 AND HIS-260</scope>
</reference>
<reference key="52">
    <citation type="journal article" date="2018" name="Mol. Cell">
        <title>PELI1 selectively targets kinase-active RIP3 for ubiquitylation-dependent proteasomal degradation.</title>
        <authorList>
            <person name="Choi S.W."/>
            <person name="Park H.H."/>
            <person name="Kim S."/>
            <person name="Chung J.M."/>
            <person name="Noh H.J."/>
            <person name="Kim S.K."/>
            <person name="Song H.K."/>
            <person name="Lee C.W."/>
            <person name="Morgan M.J."/>
            <person name="Kang H.C."/>
            <person name="Kim Y.S."/>
        </authorList>
    </citation>
    <scope>FUNCTION</scope>
</reference>
<reference key="53">
    <citation type="journal article" date="2018" name="Neurology">
        <title>Heterozygous STUB1 mutation causes familial ataxia with cognitive affective syndrome (SCA48).</title>
        <authorList>
            <person name="Genis D."/>
            <person name="Ortega-Cubero S."/>
            <person name="San Nicolas H."/>
            <person name="Corral J."/>
            <person name="Gardenyes J."/>
            <person name="de Jorge L."/>
            <person name="Lopez E."/>
            <person name="Campos B."/>
            <person name="Lorenzo E."/>
            <person name="Tonda R."/>
            <person name="Beltran S."/>
            <person name="Negre M."/>
            <person name="Obon M."/>
            <person name="Beltran B."/>
            <person name="Fabregas L."/>
            <person name="Alemany B."/>
            <person name="Marquez F."/>
            <person name="Ramio-Torrenta L."/>
            <person name="Gich J."/>
            <person name="Volpini V."/>
            <person name="Pastor P."/>
        </authorList>
    </citation>
    <scope>INVOLVEMENT IN SCA48</scope>
</reference>
<reference key="54">
    <citation type="journal article" date="2019" name="J. Cell. Physiol.">
        <title>CHIP attenuates lipopolysaccharide-induced cardiac hypertrophy and apoptosis by promoting NFATc3 proteasomal degradation.</title>
        <authorList>
            <person name="Chao C.N."/>
            <person name="Lai C.H."/>
            <person name="Badrealam K.F."/>
            <person name="Lo J.F."/>
            <person name="Shen C.Y."/>
            <person name="Chen C.H."/>
            <person name="Chen R.J."/>
            <person name="Viswanadha V.P."/>
            <person name="Kuo W.W."/>
            <person name="Huang C.Y."/>
        </authorList>
    </citation>
    <scope>FUNCTION</scope>
    <scope>INTERACTION WITH NFATC3</scope>
    <scope>MUTAGENESIS OF LYS-30 AND HIS-260</scope>
</reference>
<reference key="55">
    <citation type="journal article" date="2021" name="Life. Sci Alliance">
        <title>The uncharacterized protein FAM47E interacts with PRMT5 and regulates its functions.</title>
        <authorList>
            <person name="Chakrapani B."/>
            <person name="Khan M.I.K."/>
            <person name="Kadumuri R.V."/>
            <person name="Gupta S."/>
            <person name="Verma M."/>
            <person name="Awasthi S."/>
            <person name="Govindaraju G."/>
            <person name="Mahesh A."/>
            <person name="Rajavelu A."/>
            <person name="Chavali S."/>
            <person name="Dhayalan A."/>
        </authorList>
    </citation>
    <scope>INTERACTION WITH PRMT5</scope>
</reference>
<reference key="56">
    <citation type="journal article" date="2013" name="PLoS ONE">
        <title>Identification of CHIP as a novel causative gene for autosomal recessive cerebellar ataxia.</title>
        <authorList>
            <person name="Shi Y."/>
            <person name="Wang J."/>
            <person name="Li J.D."/>
            <person name="Ren H."/>
            <person name="Guan W."/>
            <person name="He M."/>
            <person name="Yan W."/>
            <person name="Zhou Y."/>
            <person name="Hu Z."/>
            <person name="Zhang J."/>
            <person name="Xiao J."/>
            <person name="Su Z."/>
            <person name="Dai M."/>
            <person name="Wang J."/>
            <person name="Jiang H."/>
            <person name="Guo J."/>
            <person name="Zhou Y."/>
            <person name="Zhang F."/>
            <person name="Li N."/>
            <person name="Du J."/>
            <person name="Xu Q."/>
            <person name="Hu Y."/>
            <person name="Pan Q."/>
            <person name="Shen L."/>
            <person name="Wang G."/>
            <person name="Xia K."/>
            <person name="Zhang Z."/>
            <person name="Tang B."/>
        </authorList>
    </citation>
    <scope>VARIANTS SCAR16 ILE-130; CYS-147; PHE-165 AND THR-236</scope>
    <scope>INVOLVEMENT IN SCAR16</scope>
</reference>
<reference key="57">
    <citation type="journal article" date="2014" name="Hum. Mol. Genet.">
        <title>Ataxia and hypogonadism caused by the loss of ubiquitin ligase activity of the U box protein CHIP.</title>
        <authorList>
            <person name="Shi C.H."/>
            <person name="Schisler J.C."/>
            <person name="Rubel C.E."/>
            <person name="Tan S."/>
            <person name="Song B."/>
            <person name="McDonough H."/>
            <person name="Xu L."/>
            <person name="Portbury A.L."/>
            <person name="Mao C.Y."/>
            <person name="True C."/>
            <person name="Wang R.H."/>
            <person name="Wang Q.Z."/>
            <person name="Sun S.L."/>
            <person name="Seminara S.B."/>
            <person name="Patterson C."/>
            <person name="Xu Y.M."/>
        </authorList>
    </citation>
    <scope>VARIANT SCAR16 MET-246</scope>
</reference>
<reference key="58">
    <citation type="journal article" date="2014" name="Orphanet J. Rare Dis.">
        <title>Phenotype and frequency of STUB1 mutations: next-generation screenings in Caucasian ataxia and spastic paraplegia cohorts.</title>
        <authorList>
            <person name="Synofzik M."/>
            <person name="Schuele R."/>
            <person name="Schulze M."/>
            <person name="Gburek-Augustat J."/>
            <person name="Schweizer R."/>
            <person name="Schirmacher A."/>
            <person name="Kraegeloh-Mann I."/>
            <person name="Gonzalez M."/>
            <person name="Young P."/>
            <person name="Zuechner S."/>
            <person name="Schoels L."/>
            <person name="Bauer P."/>
        </authorList>
    </citation>
    <scope>VARIANTS SCAR16 ASP-79; THR-79; VAL-123 AND THR-240</scope>
</reference>
<reference key="59">
    <citation type="journal article" date="2014" name="Neurology">
        <title>Autosomal recessive cerebellar ataxia of adult onset due to STUB1 mutations.</title>
        <authorList>
            <person name="Depondt C."/>
            <person name="Donatello S."/>
            <person name="Simonis N."/>
            <person name="Rai M."/>
            <person name="van Heurck R."/>
            <person name="Abramowicz M."/>
            <person name="D'Hooghe M."/>
            <person name="Pandolfo M."/>
        </authorList>
    </citation>
    <scope>VARIANT SCAR16 GLN-145</scope>
</reference>
<reference key="60">
    <citation type="journal article" date="2014" name="Orphanet J. Rare Dis.">
        <title>STUB1 mutations in autosomal recessive ataxias - evidence for mutation-specific clinical heterogeneity.</title>
        <authorList>
            <person name="Heimdal K."/>
            <person name="Sanchez-Guixe M."/>
            <person name="Aukrust I."/>
            <person name="Bollerslev J."/>
            <person name="Bruland O."/>
            <person name="Jablonski G.E."/>
            <person name="Erichsen A.K."/>
            <person name="Gude E."/>
            <person name="Koht J.A."/>
            <person name="Erdal S."/>
            <person name="Fiskerstrand T."/>
            <person name="Haukanes B.I."/>
            <person name="Boman H."/>
            <person name="Bjoerkhaug L."/>
            <person name="Tallaksen C.M."/>
            <person name="Knappskog P.M."/>
            <person name="Johansson S."/>
        </authorList>
    </citation>
    <scope>VARIANTS SCAR16 LYS-28; SER-65 AND MET-246</scope>
    <scope>CHARACTERIZATION OF VARIANTS SCAR16 LYS-28; SER-65 AND MET-246</scope>
</reference>
<reference key="61">
    <citation type="journal article" date="2021" name="Am. J. Hum. Genet.">
        <title>Progressive myoclonus epilepsies-Residual unsolved cases have marked genetic heterogeneity including dolichol-dependent protein glycosylation pathway genes.</title>
        <authorList>
            <person name="Courage C."/>
            <person name="Oliver K.L."/>
            <person name="Park E.J."/>
            <person name="Cameron J.M."/>
            <person name="Grabinska K.A."/>
            <person name="Muona M."/>
            <person name="Canafoglia L."/>
            <person name="Gambardella A."/>
            <person name="Said E."/>
            <person name="Afawi Z."/>
            <person name="Baykan B."/>
            <person name="Brandt C."/>
            <person name="di Bonaventura C."/>
            <person name="Chew H.B."/>
            <person name="Criscuolo C."/>
            <person name="Dibbens L.M."/>
            <person name="Castellotti B."/>
            <person name="Riguzzi P."/>
            <person name="Labate A."/>
            <person name="Filla A."/>
            <person name="Giallonardo A.T."/>
            <person name="Berecki G."/>
            <person name="Jackson C.B."/>
            <person name="Joensuu T."/>
            <person name="Damiano J.A."/>
            <person name="Kivity S."/>
            <person name="Korczyn A."/>
            <person name="Palotie A."/>
            <person name="Striano P."/>
            <person name="Uccellini D."/>
            <person name="Giuliano L."/>
            <person name="Andermann E."/>
            <person name="Scheffer I.E."/>
            <person name="Michelucci R."/>
            <person name="Bahlo M."/>
            <person name="Franceschetti S."/>
            <person name="Sessa W.C."/>
            <person name="Berkovic S.F."/>
            <person name="Lehesjoki A.E."/>
        </authorList>
    </citation>
    <scope>VARIANT SER-57</scope>
</reference>
<dbReference type="EC" id="2.3.2.27" evidence="8 10 27"/>
<dbReference type="EMBL" id="AF039689">
    <property type="protein sequence ID" value="AAC18038.1"/>
    <property type="molecule type" value="mRNA"/>
</dbReference>
<dbReference type="EMBL" id="AF129085">
    <property type="protein sequence ID" value="AAD33400.1"/>
    <property type="molecule type" value="mRNA"/>
</dbReference>
<dbReference type="EMBL" id="AF432221">
    <property type="protein sequence ID" value="AAL99927.1"/>
    <property type="molecule type" value="mRNA"/>
</dbReference>
<dbReference type="EMBL" id="AF217968">
    <property type="protein sequence ID" value="AAG17211.1"/>
    <property type="molecule type" value="mRNA"/>
</dbReference>
<dbReference type="EMBL" id="AE006464">
    <property type="protein sequence ID" value="AAK61242.1"/>
    <property type="molecule type" value="Genomic_DNA"/>
</dbReference>
<dbReference type="EMBL" id="Z92544">
    <property type="status" value="NOT_ANNOTATED_CDS"/>
    <property type="molecule type" value="Genomic_DNA"/>
</dbReference>
<dbReference type="EMBL" id="CH471112">
    <property type="protein sequence ID" value="EAW85758.1"/>
    <property type="molecule type" value="Genomic_DNA"/>
</dbReference>
<dbReference type="EMBL" id="BC007545">
    <property type="protein sequence ID" value="AAH07545.1"/>
    <property type="molecule type" value="mRNA"/>
</dbReference>
<dbReference type="EMBL" id="BC017178">
    <property type="protein sequence ID" value="AAH17178.1"/>
    <property type="molecule type" value="mRNA"/>
</dbReference>
<dbReference type="EMBL" id="BC022788">
    <property type="protein sequence ID" value="AAH22788.1"/>
    <property type="molecule type" value="mRNA"/>
</dbReference>
<dbReference type="EMBL" id="BC063617">
    <property type="protein sequence ID" value="AAH63617.1"/>
    <property type="molecule type" value="mRNA"/>
</dbReference>
<dbReference type="CCDS" id="CCDS10419.1">
    <molecule id="Q9UNE7-1"/>
</dbReference>
<dbReference type="CCDS" id="CCDS76797.1">
    <molecule id="Q9UNE7-2"/>
</dbReference>
<dbReference type="RefSeq" id="NP_001280126.1">
    <molecule id="Q9UNE7-2"/>
    <property type="nucleotide sequence ID" value="NM_001293197.2"/>
</dbReference>
<dbReference type="RefSeq" id="NP_005852.2">
    <molecule id="Q9UNE7-1"/>
    <property type="nucleotide sequence ID" value="NM_005861.4"/>
</dbReference>
<dbReference type="PDB" id="4KBQ">
    <property type="method" value="X-ray"/>
    <property type="resolution" value="2.91 A"/>
    <property type="chains" value="A/B=21-154"/>
</dbReference>
<dbReference type="PDB" id="6EFK">
    <property type="method" value="X-ray"/>
    <property type="resolution" value="1.50 A"/>
    <property type="chains" value="A/B=23-154"/>
</dbReference>
<dbReference type="PDB" id="6NSV">
    <property type="method" value="X-ray"/>
    <property type="resolution" value="1.30 A"/>
    <property type="chains" value="A/B=23-152"/>
</dbReference>
<dbReference type="PDB" id="7TB1">
    <property type="method" value="X-ray"/>
    <property type="resolution" value="1.78 A"/>
    <property type="chains" value="A/B=16-153"/>
</dbReference>
<dbReference type="PDB" id="8EHZ">
    <property type="method" value="X-ray"/>
    <property type="resolution" value="2.06 A"/>
    <property type="chains" value="A/B=21-154"/>
</dbReference>
<dbReference type="PDB" id="8EI0">
    <property type="method" value="X-ray"/>
    <property type="resolution" value="1.47 A"/>
    <property type="chains" value="A=23-154"/>
</dbReference>
<dbReference type="PDB" id="8F14">
    <property type="method" value="X-ray"/>
    <property type="resolution" value="1.69 A"/>
    <property type="chains" value="A=23-154"/>
</dbReference>
<dbReference type="PDB" id="8F15">
    <property type="method" value="X-ray"/>
    <property type="resolution" value="1.73 A"/>
    <property type="chains" value="A/B/C=23-154"/>
</dbReference>
<dbReference type="PDB" id="8F16">
    <property type="method" value="X-ray"/>
    <property type="resolution" value="1.56 A"/>
    <property type="chains" value="A/B=23-154"/>
</dbReference>
<dbReference type="PDB" id="8F17">
    <property type="method" value="X-ray"/>
    <property type="resolution" value="2.21 A"/>
    <property type="chains" value="A/B=23-154"/>
</dbReference>
<dbReference type="PDB" id="8FYU">
    <property type="method" value="X-ray"/>
    <property type="resolution" value="1.85 A"/>
    <property type="chains" value="A/B=22-149"/>
</dbReference>
<dbReference type="PDB" id="8GCK">
    <property type="method" value="X-ray"/>
    <property type="resolution" value="1.37 A"/>
    <property type="chains" value="A/B=22-149"/>
</dbReference>
<dbReference type="PDB" id="8SUV">
    <property type="method" value="X-ray"/>
    <property type="resolution" value="1.63 A"/>
    <property type="chains" value="A/B/C/D=21-154"/>
</dbReference>
<dbReference type="PDB" id="9DRY">
    <property type="method" value="EM"/>
    <property type="resolution" value="7.02 A"/>
    <property type="chains" value="A/B=226-300"/>
</dbReference>
<dbReference type="PDBsum" id="4KBQ"/>
<dbReference type="PDBsum" id="6EFK"/>
<dbReference type="PDBsum" id="6NSV"/>
<dbReference type="PDBsum" id="7TB1"/>
<dbReference type="PDBsum" id="8EHZ"/>
<dbReference type="PDBsum" id="8EI0"/>
<dbReference type="PDBsum" id="8F14"/>
<dbReference type="PDBsum" id="8F15"/>
<dbReference type="PDBsum" id="8F16"/>
<dbReference type="PDBsum" id="8F17"/>
<dbReference type="PDBsum" id="8FYU"/>
<dbReference type="PDBsum" id="8GCK"/>
<dbReference type="PDBsum" id="8SUV"/>
<dbReference type="PDBsum" id="9DRY"/>
<dbReference type="BMRB" id="Q9UNE7"/>
<dbReference type="EMDB" id="EMD-47134"/>
<dbReference type="SMR" id="Q9UNE7"/>
<dbReference type="BioGRID" id="115563">
    <property type="interactions" value="762"/>
</dbReference>
<dbReference type="CORUM" id="Q9UNE7"/>
<dbReference type="DIP" id="DIP-29752N"/>
<dbReference type="FunCoup" id="Q9UNE7">
    <property type="interactions" value="3456"/>
</dbReference>
<dbReference type="IntAct" id="Q9UNE7">
    <property type="interactions" value="304"/>
</dbReference>
<dbReference type="MINT" id="Q9UNE7"/>
<dbReference type="STRING" id="9606.ENSP00000219548"/>
<dbReference type="ChEMBL" id="CHEMBL5465258"/>
<dbReference type="GuidetoPHARMACOLOGY" id="3202"/>
<dbReference type="MoonDB" id="Q9UNE7">
    <property type="type" value="Predicted"/>
</dbReference>
<dbReference type="GlyGen" id="Q9UNE7">
    <property type="glycosylation" value="1 site, 1 O-linked glycan (1 site)"/>
</dbReference>
<dbReference type="iPTMnet" id="Q9UNE7"/>
<dbReference type="PhosphoSitePlus" id="Q9UNE7"/>
<dbReference type="SwissPalm" id="Q9UNE7"/>
<dbReference type="BioMuta" id="STUB1"/>
<dbReference type="DMDM" id="78099173"/>
<dbReference type="jPOST" id="Q9UNE7"/>
<dbReference type="MassIVE" id="Q9UNE7"/>
<dbReference type="PaxDb" id="9606-ENSP00000219548"/>
<dbReference type="PeptideAtlas" id="Q9UNE7"/>
<dbReference type="ProteomicsDB" id="85282">
    <molecule id="Q9UNE7-1"/>
</dbReference>
<dbReference type="ProteomicsDB" id="85283">
    <molecule id="Q9UNE7-2"/>
</dbReference>
<dbReference type="Pumba" id="Q9UNE7"/>
<dbReference type="Antibodypedia" id="22808">
    <property type="antibodies" value="477 antibodies from 45 providers"/>
</dbReference>
<dbReference type="DNASU" id="10273"/>
<dbReference type="Ensembl" id="ENST00000219548.9">
    <molecule id="Q9UNE7-1"/>
    <property type="protein sequence ID" value="ENSP00000219548.4"/>
    <property type="gene ID" value="ENSG00000103266.11"/>
</dbReference>
<dbReference type="Ensembl" id="ENST00000564370.5">
    <molecule id="Q9UNE7-2"/>
    <property type="protein sequence ID" value="ENSP00000456875.1"/>
    <property type="gene ID" value="ENSG00000103266.11"/>
</dbReference>
<dbReference type="Ensembl" id="ENST00000565677.5">
    <molecule id="Q9UNE7-2"/>
    <property type="protein sequence ID" value="ENSP00000457228.1"/>
    <property type="gene ID" value="ENSG00000103266.11"/>
</dbReference>
<dbReference type="GeneID" id="10273"/>
<dbReference type="KEGG" id="hsa:10273"/>
<dbReference type="MANE-Select" id="ENST00000219548.9">
    <property type="protein sequence ID" value="ENSP00000219548.4"/>
    <property type="RefSeq nucleotide sequence ID" value="NM_005861.4"/>
    <property type="RefSeq protein sequence ID" value="NP_005852.2"/>
</dbReference>
<dbReference type="UCSC" id="uc002cit.4">
    <molecule id="Q9UNE7-1"/>
    <property type="organism name" value="human"/>
</dbReference>
<dbReference type="AGR" id="HGNC:11427"/>
<dbReference type="CTD" id="10273"/>
<dbReference type="DisGeNET" id="10273"/>
<dbReference type="GeneCards" id="STUB1"/>
<dbReference type="HGNC" id="HGNC:11427">
    <property type="gene designation" value="STUB1"/>
</dbReference>
<dbReference type="HPA" id="ENSG00000103266">
    <property type="expression patterns" value="Low tissue specificity"/>
</dbReference>
<dbReference type="MalaCards" id="STUB1"/>
<dbReference type="MIM" id="607207">
    <property type="type" value="gene"/>
</dbReference>
<dbReference type="MIM" id="615768">
    <property type="type" value="phenotype"/>
</dbReference>
<dbReference type="MIM" id="618093">
    <property type="type" value="phenotype"/>
</dbReference>
<dbReference type="neXtProt" id="NX_Q9UNE7"/>
<dbReference type="OpenTargets" id="ENSG00000103266"/>
<dbReference type="Orphanet" id="412057">
    <property type="disease" value="Autosomal recessive cerebellar ataxia due to STUB1 deficiency"/>
</dbReference>
<dbReference type="Orphanet" id="631103">
    <property type="disease" value="Spinocerebellar ataxia type 48"/>
</dbReference>
<dbReference type="PharmGKB" id="PA36227"/>
<dbReference type="VEuPathDB" id="HostDB:ENSG00000103266"/>
<dbReference type="eggNOG" id="KOG4642">
    <property type="taxonomic scope" value="Eukaryota"/>
</dbReference>
<dbReference type="GeneTree" id="ENSGT00930000151045"/>
<dbReference type="HOGENOM" id="CLU_056455_1_0_1"/>
<dbReference type="InParanoid" id="Q9UNE7"/>
<dbReference type="OMA" id="WAGVEHD"/>
<dbReference type="OrthoDB" id="629492at2759"/>
<dbReference type="PAN-GO" id="Q9UNE7">
    <property type="GO annotations" value="9 GO annotations based on evolutionary models"/>
</dbReference>
<dbReference type="PhylomeDB" id="Q9UNE7"/>
<dbReference type="TreeFam" id="TF313937"/>
<dbReference type="BRENDA" id="2.3.2.27">
    <property type="organism ID" value="2681"/>
</dbReference>
<dbReference type="PathwayCommons" id="Q9UNE7"/>
<dbReference type="Reactome" id="R-HSA-2173788">
    <property type="pathway name" value="Downregulation of TGF-beta receptor signaling"/>
</dbReference>
<dbReference type="Reactome" id="R-HSA-5213460">
    <property type="pathway name" value="RIPK1-mediated regulated necrosis"/>
</dbReference>
<dbReference type="Reactome" id="R-HSA-5357905">
    <property type="pathway name" value="Regulation of TNFR1 signaling"/>
</dbReference>
<dbReference type="Reactome" id="R-HSA-5675482">
    <property type="pathway name" value="Regulation of necroptotic cell death"/>
</dbReference>
<dbReference type="Reactome" id="R-HSA-8863795">
    <property type="pathway name" value="Downregulation of ERBB2 signaling"/>
</dbReference>
<dbReference type="Reactome" id="R-HSA-8939902">
    <property type="pathway name" value="Regulation of RUNX2 expression and activity"/>
</dbReference>
<dbReference type="Reactome" id="R-HSA-8948751">
    <property type="pathway name" value="Regulation of PTEN stability and activity"/>
</dbReference>
<dbReference type="Reactome" id="R-HSA-983168">
    <property type="pathway name" value="Antigen processing: Ubiquitination &amp; Proteasome degradation"/>
</dbReference>
<dbReference type="SignaLink" id="Q9UNE7"/>
<dbReference type="SIGNOR" id="Q9UNE7"/>
<dbReference type="UniPathway" id="UPA00143"/>
<dbReference type="BioGRID-ORCS" id="10273">
    <property type="hits" value="123 hits in 1208 CRISPR screens"/>
</dbReference>
<dbReference type="CD-CODE" id="FB4E32DD">
    <property type="entry name" value="Presynaptic clusters and postsynaptic densities"/>
</dbReference>
<dbReference type="ChiTaRS" id="STUB1">
    <property type="organism name" value="human"/>
</dbReference>
<dbReference type="EvolutionaryTrace" id="Q9UNE7"/>
<dbReference type="GeneWiki" id="STUB1"/>
<dbReference type="GenomeRNAi" id="10273"/>
<dbReference type="Pharos" id="Q9UNE7">
    <property type="development level" value="Tbio"/>
</dbReference>
<dbReference type="PRO" id="PR:Q9UNE7"/>
<dbReference type="Proteomes" id="UP000005640">
    <property type="component" value="Chromosome 16"/>
</dbReference>
<dbReference type="RNAct" id="Q9UNE7">
    <property type="molecule type" value="protein"/>
</dbReference>
<dbReference type="Bgee" id="ENSG00000103266">
    <property type="expression patterns" value="Expressed in lateral nuclear group of thalamus and 202 other cell types or tissues"/>
</dbReference>
<dbReference type="ExpressionAtlas" id="Q9UNE7">
    <property type="expression patterns" value="baseline and differential"/>
</dbReference>
<dbReference type="GO" id="GO:0005737">
    <property type="term" value="C:cytoplasm"/>
    <property type="evidence" value="ECO:0000314"/>
    <property type="project" value="BHF-UCL"/>
</dbReference>
<dbReference type="GO" id="GO:0005829">
    <property type="term" value="C:cytosol"/>
    <property type="evidence" value="ECO:0000314"/>
    <property type="project" value="HPA"/>
</dbReference>
<dbReference type="GO" id="GO:0005783">
    <property type="term" value="C:endoplasmic reticulum"/>
    <property type="evidence" value="ECO:0000314"/>
    <property type="project" value="ParkinsonsUK-UCL"/>
</dbReference>
<dbReference type="GO" id="GO:0005739">
    <property type="term" value="C:mitochondrion"/>
    <property type="evidence" value="ECO:0000250"/>
    <property type="project" value="UniProtKB"/>
</dbReference>
<dbReference type="GO" id="GO:0042405">
    <property type="term" value="C:nuclear inclusion body"/>
    <property type="evidence" value="ECO:0000314"/>
    <property type="project" value="BHF-UCL"/>
</dbReference>
<dbReference type="GO" id="GO:0005654">
    <property type="term" value="C:nucleoplasm"/>
    <property type="evidence" value="ECO:0000314"/>
    <property type="project" value="HPA"/>
</dbReference>
<dbReference type="GO" id="GO:0005634">
    <property type="term" value="C:nucleus"/>
    <property type="evidence" value="ECO:0000314"/>
    <property type="project" value="UniProt"/>
</dbReference>
<dbReference type="GO" id="GO:0101031">
    <property type="term" value="C:protein folding chaperone complex"/>
    <property type="evidence" value="ECO:0000353"/>
    <property type="project" value="ARUK-UCL"/>
</dbReference>
<dbReference type="GO" id="GO:0031371">
    <property type="term" value="C:ubiquitin conjugating enzyme complex"/>
    <property type="evidence" value="ECO:0000304"/>
    <property type="project" value="HGNC-UCL"/>
</dbReference>
<dbReference type="GO" id="GO:0000151">
    <property type="term" value="C:ubiquitin ligase complex"/>
    <property type="evidence" value="ECO:0000314"/>
    <property type="project" value="UniProtKB"/>
</dbReference>
<dbReference type="GO" id="GO:0030018">
    <property type="term" value="C:Z disc"/>
    <property type="evidence" value="ECO:0000318"/>
    <property type="project" value="GO_Central"/>
</dbReference>
<dbReference type="GO" id="GO:0019899">
    <property type="term" value="F:enzyme binding"/>
    <property type="evidence" value="ECO:0000353"/>
    <property type="project" value="UniProtKB"/>
</dbReference>
<dbReference type="GO" id="GO:0001664">
    <property type="term" value="F:G protein-coupled receptor binding"/>
    <property type="evidence" value="ECO:0000353"/>
    <property type="project" value="ParkinsonsUK-UCL"/>
</dbReference>
<dbReference type="GO" id="GO:0031072">
    <property type="term" value="F:heat shock protein binding"/>
    <property type="evidence" value="ECO:0000353"/>
    <property type="project" value="ARUK-UCL"/>
</dbReference>
<dbReference type="GO" id="GO:0030544">
    <property type="term" value="F:Hsp70 protein binding"/>
    <property type="evidence" value="ECO:0000314"/>
    <property type="project" value="HGNC-UCL"/>
</dbReference>
<dbReference type="GO" id="GO:0051879">
    <property type="term" value="F:Hsp90 protein binding"/>
    <property type="evidence" value="ECO:0000314"/>
    <property type="project" value="BHF-UCL"/>
</dbReference>
<dbReference type="GO" id="GO:0019900">
    <property type="term" value="F:kinase binding"/>
    <property type="evidence" value="ECO:0000353"/>
    <property type="project" value="BHF-UCL"/>
</dbReference>
<dbReference type="GO" id="GO:0051787">
    <property type="term" value="F:misfolded protein binding"/>
    <property type="evidence" value="ECO:0000314"/>
    <property type="project" value="BHF-UCL"/>
</dbReference>
<dbReference type="GO" id="GO:0042803">
    <property type="term" value="F:protein homodimerization activity"/>
    <property type="evidence" value="ECO:0000353"/>
    <property type="project" value="ParkinsonsUK-UCL"/>
</dbReference>
<dbReference type="GO" id="GO:0051087">
    <property type="term" value="F:protein-folding chaperone binding"/>
    <property type="evidence" value="ECO:0000353"/>
    <property type="project" value="ARUK-UCL"/>
</dbReference>
<dbReference type="GO" id="GO:0030674">
    <property type="term" value="F:protein-macromolecule adaptor activity"/>
    <property type="evidence" value="ECO:0000304"/>
    <property type="project" value="HGNC-UCL"/>
</dbReference>
<dbReference type="GO" id="GO:0070412">
    <property type="term" value="F:R-SMAD binding"/>
    <property type="evidence" value="ECO:0000353"/>
    <property type="project" value="HGNC-UCL"/>
</dbReference>
<dbReference type="GO" id="GO:0046332">
    <property type="term" value="F:SMAD binding"/>
    <property type="evidence" value="ECO:0000353"/>
    <property type="project" value="UniProtKB"/>
</dbReference>
<dbReference type="GO" id="GO:0048156">
    <property type="term" value="F:tau protein binding"/>
    <property type="evidence" value="ECO:0000303"/>
    <property type="project" value="ARUK-UCL"/>
</dbReference>
<dbReference type="GO" id="GO:0030911">
    <property type="term" value="F:TPR domain binding"/>
    <property type="evidence" value="ECO:0000314"/>
    <property type="project" value="HGNC-UCL"/>
</dbReference>
<dbReference type="GO" id="GO:0061630">
    <property type="term" value="F:ubiquitin protein ligase activity"/>
    <property type="evidence" value="ECO:0000314"/>
    <property type="project" value="UniProtKB"/>
</dbReference>
<dbReference type="GO" id="GO:0031625">
    <property type="term" value="F:ubiquitin protein ligase binding"/>
    <property type="evidence" value="ECO:0000353"/>
    <property type="project" value="ParkinsonsUK-UCL"/>
</dbReference>
<dbReference type="GO" id="GO:0004842">
    <property type="term" value="F:ubiquitin-protein transferase activity"/>
    <property type="evidence" value="ECO:0000314"/>
    <property type="project" value="UniProtKB"/>
</dbReference>
<dbReference type="GO" id="GO:0034450">
    <property type="term" value="F:ubiquitin-ubiquitin ligase activity"/>
    <property type="evidence" value="ECO:0000250"/>
    <property type="project" value="UniProtKB"/>
</dbReference>
<dbReference type="GO" id="GO:0034605">
    <property type="term" value="P:cellular response to heat"/>
    <property type="evidence" value="ECO:0000250"/>
    <property type="project" value="ARUK-UCL"/>
</dbReference>
<dbReference type="GO" id="GO:0071456">
    <property type="term" value="P:cellular response to hypoxia"/>
    <property type="evidence" value="ECO:0000250"/>
    <property type="project" value="ARUK-UCL"/>
</dbReference>
<dbReference type="GO" id="GO:0071218">
    <property type="term" value="P:cellular response to misfolded protein"/>
    <property type="evidence" value="ECO:0000314"/>
    <property type="project" value="BHF-UCL"/>
</dbReference>
<dbReference type="GO" id="GO:0061684">
    <property type="term" value="P:chaperone-mediated autophagy"/>
    <property type="evidence" value="ECO:0007669"/>
    <property type="project" value="Ensembl"/>
</dbReference>
<dbReference type="GO" id="GO:0006281">
    <property type="term" value="P:DNA repair"/>
    <property type="evidence" value="ECO:0007669"/>
    <property type="project" value="UniProtKB-KW"/>
</dbReference>
<dbReference type="GO" id="GO:0030968">
    <property type="term" value="P:endoplasmic reticulum unfolded protein response"/>
    <property type="evidence" value="ECO:0007669"/>
    <property type="project" value="Ensembl"/>
</dbReference>
<dbReference type="GO" id="GO:0036503">
    <property type="term" value="P:ERAD pathway"/>
    <property type="evidence" value="ECO:0000315"/>
    <property type="project" value="ParkinsonsUK-UCL"/>
</dbReference>
<dbReference type="GO" id="GO:0038128">
    <property type="term" value="P:ERBB2 signaling pathway"/>
    <property type="evidence" value="ECO:0000304"/>
    <property type="project" value="Reactome"/>
</dbReference>
<dbReference type="GO" id="GO:0000165">
    <property type="term" value="P:MAPK cascade"/>
    <property type="evidence" value="ECO:0000250"/>
    <property type="project" value="UniProtKB"/>
</dbReference>
<dbReference type="GO" id="GO:0010614">
    <property type="term" value="P:negative regulation of cardiac muscle hypertrophy"/>
    <property type="evidence" value="ECO:0007669"/>
    <property type="project" value="Ensembl"/>
</dbReference>
<dbReference type="GO" id="GO:0035359">
    <property type="term" value="P:negative regulation of peroxisome proliferator activated receptor signaling pathway"/>
    <property type="evidence" value="ECO:0000250"/>
    <property type="project" value="UniProtKB"/>
</dbReference>
<dbReference type="GO" id="GO:0034392">
    <property type="term" value="P:negative regulation of smooth muscle cell apoptotic process"/>
    <property type="evidence" value="ECO:0000315"/>
    <property type="project" value="UniProtKB"/>
</dbReference>
<dbReference type="GO" id="GO:0030512">
    <property type="term" value="P:negative regulation of transforming growth factor beta receptor signaling pathway"/>
    <property type="evidence" value="ECO:0000315"/>
    <property type="project" value="UniProtKB"/>
</dbReference>
<dbReference type="GO" id="GO:1904694">
    <property type="term" value="P:negative regulation of vascular associated smooth muscle contraction"/>
    <property type="evidence" value="ECO:0007669"/>
    <property type="project" value="Ensembl"/>
</dbReference>
<dbReference type="GO" id="GO:0090035">
    <property type="term" value="P:positive regulation of chaperone-mediated protein complex assembly"/>
    <property type="evidence" value="ECO:0000314"/>
    <property type="project" value="BHF-UCL"/>
</dbReference>
<dbReference type="GO" id="GO:1904294">
    <property type="term" value="P:positive regulation of ERAD pathway"/>
    <property type="evidence" value="ECO:0000315"/>
    <property type="project" value="UniProtKB"/>
</dbReference>
<dbReference type="GO" id="GO:1901526">
    <property type="term" value="P:positive regulation of mitophagy"/>
    <property type="evidence" value="ECO:0000250"/>
    <property type="project" value="UniProtKB"/>
</dbReference>
<dbReference type="GO" id="GO:0032436">
    <property type="term" value="P:positive regulation of proteasomal ubiquitin-dependent protein catabolic process"/>
    <property type="evidence" value="ECO:0000314"/>
    <property type="project" value="HGNC-UCL"/>
</dbReference>
<dbReference type="GO" id="GO:0031398">
    <property type="term" value="P:positive regulation of protein ubiquitination"/>
    <property type="evidence" value="ECO:0000314"/>
    <property type="project" value="HGNC-UCL"/>
</dbReference>
<dbReference type="GO" id="GO:0045862">
    <property type="term" value="P:positive regulation of proteolysis"/>
    <property type="evidence" value="ECO:0000315"/>
    <property type="project" value="UniProtKB"/>
</dbReference>
<dbReference type="GO" id="GO:0034393">
    <property type="term" value="P:positive regulation of smooth muscle cell apoptotic process"/>
    <property type="evidence" value="ECO:0000250"/>
    <property type="project" value="UniProtKB"/>
</dbReference>
<dbReference type="GO" id="GO:0043161">
    <property type="term" value="P:proteasome-mediated ubiquitin-dependent protein catabolic process"/>
    <property type="evidence" value="ECO:0000314"/>
    <property type="project" value="UniProtKB"/>
</dbReference>
<dbReference type="GO" id="GO:0051865">
    <property type="term" value="P:protein autoubiquitination"/>
    <property type="evidence" value="ECO:0000314"/>
    <property type="project" value="UniProtKB"/>
</dbReference>
<dbReference type="GO" id="GO:0070534">
    <property type="term" value="P:protein K63-linked ubiquitination"/>
    <property type="evidence" value="ECO:0000314"/>
    <property type="project" value="UniProtKB"/>
</dbReference>
<dbReference type="GO" id="GO:0006513">
    <property type="term" value="P:protein monoubiquitination"/>
    <property type="evidence" value="ECO:0000314"/>
    <property type="project" value="UniProt"/>
</dbReference>
<dbReference type="GO" id="GO:0000209">
    <property type="term" value="P:protein polyubiquitination"/>
    <property type="evidence" value="ECO:0000314"/>
    <property type="project" value="HGNC-UCL"/>
</dbReference>
<dbReference type="GO" id="GO:0006515">
    <property type="term" value="P:protein quality control for misfolded or incompletely synthesized proteins"/>
    <property type="evidence" value="ECO:0000314"/>
    <property type="project" value="BHF-UCL"/>
</dbReference>
<dbReference type="GO" id="GO:0050821">
    <property type="term" value="P:protein stabilization"/>
    <property type="evidence" value="ECO:0000314"/>
    <property type="project" value="UniProt"/>
</dbReference>
<dbReference type="GO" id="GO:0016567">
    <property type="term" value="P:protein ubiquitination"/>
    <property type="evidence" value="ECO:0000314"/>
    <property type="project" value="FlyBase"/>
</dbReference>
<dbReference type="GO" id="GO:0031943">
    <property type="term" value="P:regulation of glucocorticoid metabolic process"/>
    <property type="evidence" value="ECO:0000314"/>
    <property type="project" value="HGNC-UCL"/>
</dbReference>
<dbReference type="GO" id="GO:0031647">
    <property type="term" value="P:regulation of protein stability"/>
    <property type="evidence" value="ECO:0000314"/>
    <property type="project" value="BHF-UCL"/>
</dbReference>
<dbReference type="GO" id="GO:0002931">
    <property type="term" value="P:response to ischemia"/>
    <property type="evidence" value="ECO:0000250"/>
    <property type="project" value="ARUK-UCL"/>
</dbReference>
<dbReference type="GO" id="GO:0006511">
    <property type="term" value="P:ubiquitin-dependent protein catabolic process"/>
    <property type="evidence" value="ECO:0000315"/>
    <property type="project" value="UniProtKB"/>
</dbReference>
<dbReference type="CDD" id="cd16654">
    <property type="entry name" value="RING-Ubox_CHIP"/>
    <property type="match status" value="1"/>
</dbReference>
<dbReference type="FunFam" id="1.25.40.10:FF:000198">
    <property type="entry name" value="E3 ubiquitin-protein ligase CHIP isoform X2"/>
    <property type="match status" value="1"/>
</dbReference>
<dbReference type="FunFam" id="3.30.40.10:FF:000124">
    <property type="entry name" value="STIP1 homology and U box-containing protein 1"/>
    <property type="match status" value="1"/>
</dbReference>
<dbReference type="Gene3D" id="6.10.140.2020">
    <property type="match status" value="1"/>
</dbReference>
<dbReference type="Gene3D" id="1.25.40.10">
    <property type="entry name" value="Tetratricopeptide repeat domain"/>
    <property type="match status" value="1"/>
</dbReference>
<dbReference type="Gene3D" id="3.30.40.10">
    <property type="entry name" value="Zinc/RING finger domain, C3HC4 (zinc finger)"/>
    <property type="match status" value="1"/>
</dbReference>
<dbReference type="InterPro" id="IPR045202">
    <property type="entry name" value="CHIP_RING-Ubox"/>
</dbReference>
<dbReference type="InterPro" id="IPR041312">
    <property type="entry name" value="CHIP_TPR_N"/>
</dbReference>
<dbReference type="InterPro" id="IPR011990">
    <property type="entry name" value="TPR-like_helical_dom_sf"/>
</dbReference>
<dbReference type="InterPro" id="IPR019734">
    <property type="entry name" value="TPR_rpt"/>
</dbReference>
<dbReference type="InterPro" id="IPR003613">
    <property type="entry name" value="Ubox_domain"/>
</dbReference>
<dbReference type="InterPro" id="IPR013083">
    <property type="entry name" value="Znf_RING/FYVE/PHD"/>
</dbReference>
<dbReference type="PANTHER" id="PTHR46803">
    <property type="entry name" value="E3 UBIQUITIN-PROTEIN LIGASE CHIP"/>
    <property type="match status" value="1"/>
</dbReference>
<dbReference type="PANTHER" id="PTHR46803:SF2">
    <property type="entry name" value="E3 UBIQUITIN-PROTEIN LIGASE CHIP"/>
    <property type="match status" value="1"/>
</dbReference>
<dbReference type="Pfam" id="PF12895">
    <property type="entry name" value="ANAPC3"/>
    <property type="match status" value="1"/>
</dbReference>
<dbReference type="Pfam" id="PF18391">
    <property type="entry name" value="CHIP_TPR_N"/>
    <property type="match status" value="1"/>
</dbReference>
<dbReference type="Pfam" id="PF04564">
    <property type="entry name" value="U-box"/>
    <property type="match status" value="1"/>
</dbReference>
<dbReference type="SMART" id="SM00028">
    <property type="entry name" value="TPR"/>
    <property type="match status" value="3"/>
</dbReference>
<dbReference type="SMART" id="SM00504">
    <property type="entry name" value="Ubox"/>
    <property type="match status" value="1"/>
</dbReference>
<dbReference type="SUPFAM" id="SSF57850">
    <property type="entry name" value="RING/U-box"/>
    <property type="match status" value="1"/>
</dbReference>
<dbReference type="SUPFAM" id="SSF48452">
    <property type="entry name" value="TPR-like"/>
    <property type="match status" value="1"/>
</dbReference>
<dbReference type="PROSITE" id="PS50005">
    <property type="entry name" value="TPR"/>
    <property type="match status" value="3"/>
</dbReference>
<dbReference type="PROSITE" id="PS50293">
    <property type="entry name" value="TPR_REGION"/>
    <property type="match status" value="1"/>
</dbReference>
<dbReference type="PROSITE" id="PS51698">
    <property type="entry name" value="U_BOX"/>
    <property type="match status" value="1"/>
</dbReference>
<organism>
    <name type="scientific">Homo sapiens</name>
    <name type="common">Human</name>
    <dbReference type="NCBI Taxonomy" id="9606"/>
    <lineage>
        <taxon>Eukaryota</taxon>
        <taxon>Metazoa</taxon>
        <taxon>Chordata</taxon>
        <taxon>Craniata</taxon>
        <taxon>Vertebrata</taxon>
        <taxon>Euteleostomi</taxon>
        <taxon>Mammalia</taxon>
        <taxon>Eutheria</taxon>
        <taxon>Euarchontoglires</taxon>
        <taxon>Primates</taxon>
        <taxon>Haplorrhini</taxon>
        <taxon>Catarrhini</taxon>
        <taxon>Hominidae</taxon>
        <taxon>Homo</taxon>
    </lineage>
</organism>
<evidence type="ECO:0000250" key="1"/>
<evidence type="ECO:0000250" key="2">
    <source>
        <dbReference type="UniProtKB" id="A6HD62"/>
    </source>
</evidence>
<evidence type="ECO:0000250" key="3">
    <source>
        <dbReference type="UniProtKB" id="Q9WUD1"/>
    </source>
</evidence>
<evidence type="ECO:0000256" key="4">
    <source>
        <dbReference type="SAM" id="MobiDB-lite"/>
    </source>
</evidence>
<evidence type="ECO:0000269" key="5">
    <source>
    </source>
</evidence>
<evidence type="ECO:0000269" key="6">
    <source>
    </source>
</evidence>
<evidence type="ECO:0000269" key="7">
    <source>
    </source>
</evidence>
<evidence type="ECO:0000269" key="8">
    <source>
    </source>
</evidence>
<evidence type="ECO:0000269" key="9">
    <source>
    </source>
</evidence>
<evidence type="ECO:0000269" key="10">
    <source>
    </source>
</evidence>
<evidence type="ECO:0000269" key="11">
    <source>
    </source>
</evidence>
<evidence type="ECO:0000269" key="12">
    <source>
    </source>
</evidence>
<evidence type="ECO:0000269" key="13">
    <source>
    </source>
</evidence>
<evidence type="ECO:0000269" key="14">
    <source>
    </source>
</evidence>
<evidence type="ECO:0000269" key="15">
    <source>
    </source>
</evidence>
<evidence type="ECO:0000269" key="16">
    <source>
    </source>
</evidence>
<evidence type="ECO:0000269" key="17">
    <source>
    </source>
</evidence>
<evidence type="ECO:0000269" key="18">
    <source>
    </source>
</evidence>
<evidence type="ECO:0000269" key="19">
    <source>
    </source>
</evidence>
<evidence type="ECO:0000269" key="20">
    <source>
    </source>
</evidence>
<evidence type="ECO:0000269" key="21">
    <source>
    </source>
</evidence>
<evidence type="ECO:0000269" key="22">
    <source>
    </source>
</evidence>
<evidence type="ECO:0000269" key="23">
    <source>
    </source>
</evidence>
<evidence type="ECO:0000269" key="24">
    <source>
    </source>
</evidence>
<evidence type="ECO:0000269" key="25">
    <source>
    </source>
</evidence>
<evidence type="ECO:0000269" key="26">
    <source>
    </source>
</evidence>
<evidence type="ECO:0000269" key="27">
    <source>
    </source>
</evidence>
<evidence type="ECO:0000269" key="28">
    <source>
    </source>
</evidence>
<evidence type="ECO:0000269" key="29">
    <source>
    </source>
</evidence>
<evidence type="ECO:0000269" key="30">
    <source>
    </source>
</evidence>
<evidence type="ECO:0000269" key="31">
    <source>
    </source>
</evidence>
<evidence type="ECO:0000269" key="32">
    <source>
    </source>
</evidence>
<evidence type="ECO:0000269" key="33">
    <source>
    </source>
</evidence>
<evidence type="ECO:0000269" key="34">
    <source>
    </source>
</evidence>
<evidence type="ECO:0000269" key="35">
    <source>
    </source>
</evidence>
<evidence type="ECO:0000269" key="36">
    <source>
    </source>
</evidence>
<evidence type="ECO:0000269" key="37">
    <source>
    </source>
</evidence>
<evidence type="ECO:0000269" key="38">
    <source>
    </source>
</evidence>
<evidence type="ECO:0000269" key="39">
    <source>
    </source>
</evidence>
<evidence type="ECO:0000269" key="40">
    <source>
    </source>
</evidence>
<evidence type="ECO:0000269" key="41">
    <source>
    </source>
</evidence>
<evidence type="ECO:0000269" key="42">
    <source>
    </source>
</evidence>
<evidence type="ECO:0000269" key="43">
    <source>
    </source>
</evidence>
<evidence type="ECO:0000269" key="44">
    <source ref="9"/>
</evidence>
<evidence type="ECO:0000303" key="45">
    <source>
    </source>
</evidence>
<evidence type="ECO:0000303" key="46">
    <source>
    </source>
</evidence>
<evidence type="ECO:0000303" key="47">
    <source>
    </source>
</evidence>
<evidence type="ECO:0000303" key="48">
    <source>
    </source>
</evidence>
<evidence type="ECO:0000303" key="49">
    <source>
    </source>
</evidence>
<evidence type="ECO:0000303" key="50">
    <source>
    </source>
</evidence>
<evidence type="ECO:0000305" key="51"/>
<evidence type="ECO:0000312" key="52">
    <source>
        <dbReference type="EMBL" id="AAG17211.1"/>
    </source>
</evidence>
<evidence type="ECO:0000312" key="53">
    <source>
        <dbReference type="HGNC" id="HGNC:11427"/>
    </source>
</evidence>
<evidence type="ECO:0007744" key="54">
    <source>
    </source>
</evidence>
<evidence type="ECO:0007744" key="55">
    <source>
    </source>
</evidence>
<evidence type="ECO:0007744" key="56">
    <source>
    </source>
</evidence>
<evidence type="ECO:0007744" key="57">
    <source>
    </source>
</evidence>
<evidence type="ECO:0007744" key="58">
    <source>
    </source>
</evidence>
<evidence type="ECO:0007744" key="59">
    <source>
    </source>
</evidence>
<evidence type="ECO:0007744" key="60">
    <source>
    </source>
</evidence>
<evidence type="ECO:0007744" key="61">
    <source>
    </source>
</evidence>
<evidence type="ECO:0007829" key="62">
    <source>
        <dbReference type="PDB" id="6NSV"/>
    </source>
</evidence>
<proteinExistence type="evidence at protein level"/>
<sequence>MKGKEEKEGGARLGAGGGSPEKSPSAQELKEQGNRLFVGRKYPEAAACYGRAITRNPLVAVYYTNRALCYLKMQQHEQALADCRRALELDGQSVKAHFFLGQCQLEMESYDEAIANLQRAYSLAKEQRLNFGDDIPSALRIAKKKRWNSIEERRIHQESELHSYLSRLIAAERERELEECQRNHEGDEDDSHVRAQQACIEAKHDKYMADMDELFSQVDEKRKKRDIPDYLCGKISFELMREPCITPSGITYDRKDIEEHLQRVGHFDPVTRSPLTQEQLIPNLAMKEVIDAFISENGWVEDY</sequence>
<protein>
    <recommendedName>
        <fullName evidence="51">E3 ubiquitin-protein ligase CHIP</fullName>
        <ecNumber evidence="8 10 27">2.3.2.27</ecNumber>
    </recommendedName>
    <alternativeName>
        <fullName evidence="50">Antigen NY-CO-7</fullName>
    </alternativeName>
    <alternativeName>
        <fullName evidence="46">CLL-associated antigen KW-8</fullName>
    </alternativeName>
    <alternativeName>
        <fullName evidence="45">Carboxy terminus of Hsp70-interacting protein</fullName>
    </alternativeName>
    <alternativeName>
        <fullName evidence="51">RING-type E3 ubiquitin transferase CHIP</fullName>
    </alternativeName>
    <alternativeName>
        <fullName evidence="53">STIP1 homology and U box-containing protein 1</fullName>
    </alternativeName>
</protein>
<feature type="chain" id="PRO_0000106329" description="E3 ubiquitin-protein ligase CHIP">
    <location>
        <begin position="1"/>
        <end position="303"/>
    </location>
</feature>
<feature type="repeat" description="TPR 1">
    <location>
        <begin position="26"/>
        <end position="59"/>
    </location>
</feature>
<feature type="repeat" description="TPR 2">
    <location>
        <begin position="60"/>
        <end position="93"/>
    </location>
</feature>
<feature type="repeat" description="TPR 3">
    <location>
        <begin position="95"/>
        <end position="127"/>
    </location>
</feature>
<feature type="domain" description="U-box">
    <location>
        <begin position="226"/>
        <end position="300"/>
    </location>
</feature>
<feature type="region of interest" description="Disordered" evidence="4">
    <location>
        <begin position="1"/>
        <end position="30"/>
    </location>
</feature>
<feature type="region of interest" description="Required for interaction with MAPK7" evidence="22">
    <location>
        <begin position="101"/>
        <end position="200"/>
    </location>
</feature>
<feature type="region of interest" description="Required for interaction with and ubiquitination of MYOCD" evidence="2">
    <location>
        <begin position="142"/>
        <end position="196"/>
    </location>
</feature>
<feature type="region of interest" description="Required for ubiquitination of FOXO1" evidence="18">
    <location>
        <begin position="143"/>
        <end position="303"/>
    </location>
</feature>
<feature type="region of interest" description="Required for interaction with FOXO1" evidence="18">
    <location>
        <begin position="143"/>
        <end position="197"/>
    </location>
</feature>
<feature type="compositionally biased region" description="Basic and acidic residues" evidence="4">
    <location>
        <begin position="1"/>
        <end position="10"/>
    </location>
</feature>
<feature type="modified residue" description="Phosphoserine" evidence="44 54 55 56 57 58 59 60 61">
    <location>
        <position position="19"/>
    </location>
</feature>
<feature type="modified residue" description="Phosphoserine" evidence="55 59 60">
    <location>
        <position position="23"/>
    </location>
</feature>
<feature type="modified residue" description="Phosphoserine" evidence="60">
    <location>
        <position position="25"/>
    </location>
</feature>
<feature type="modified residue" description="Phosphoserine" evidence="60">
    <location>
        <position position="149"/>
    </location>
</feature>
<feature type="modified residue" description="Phosphoserine" evidence="55 58">
    <location>
        <position position="273"/>
    </location>
</feature>
<feature type="cross-link" description="Glycyl lysine isopeptide (Lys-Gly) (interchain with G-Cter in ubiquitin)" evidence="24">
    <location>
        <position position="2"/>
    </location>
</feature>
<feature type="cross-link" description="Glycyl lysine isopeptide (Lys-Gly) (interchain with G-Cter in ubiquitin)" evidence="14">
    <location>
        <position position="22"/>
    </location>
</feature>
<feature type="cross-link" description="Glycyl lysine isopeptide (Lys-Gly) (interchain with G-Cter in ubiquitin)" evidence="14">
    <location>
        <position position="221"/>
    </location>
</feature>
<feature type="cross-link" description="Glycyl lysine isopeptide (Lys-Gly) (interchain with G-Cter in ubiquitin)" evidence="14">
    <location>
        <position position="255"/>
    </location>
</feature>
<feature type="splice variant" id="VSP_015947" description="In isoform 2." evidence="47">
    <location>
        <begin position="1"/>
        <end position="72"/>
    </location>
</feature>
<feature type="sequence variant" id="VAR_072348" description="In SCAR16; reduces protein level; does not reduce ubiquitin ligase activity and autoubiquitination." evidence="33">
    <original>E</original>
    <variation>K</variation>
    <location>
        <position position="28"/>
    </location>
</feature>
<feature type="sequence variant" id="VAR_085041" description="Found in a patient with progressive myoclonus epilepsy; uncertain significance." evidence="43">
    <original>P</original>
    <variation>S</variation>
    <location>
        <position position="57"/>
    </location>
</feature>
<feature type="sequence variant" id="VAR_072349" description="In SCAR16; reduces protein level; reduces ubiquitin ligase activity; does not change autoubiquitination; dbSNP:rs690016544." evidence="33">
    <original>N</original>
    <variation>S</variation>
    <location>
        <position position="65"/>
    </location>
</feature>
<feature type="sequence variant" id="VAR_071293" description="In SCAR16; dbSNP:rs587777347." evidence="32">
    <original>A</original>
    <variation>D</variation>
    <location>
        <position position="79"/>
    </location>
</feature>
<feature type="sequence variant" id="VAR_071294" description="In SCAR16; dbSNP:rs587777346." evidence="32">
    <original>A</original>
    <variation>T</variation>
    <location>
        <position position="79"/>
    </location>
</feature>
<feature type="sequence variant" id="VAR_071295" description="In SCAR16; dbSNP:rs587777344." evidence="32">
    <original>L</original>
    <variation>V</variation>
    <location>
        <position position="123"/>
    </location>
</feature>
<feature type="sequence variant" id="VAR_071296" description="In SCAR16; dbSNP:rs587777341." evidence="29">
    <original>N</original>
    <variation>I</variation>
    <location>
        <position position="130"/>
    </location>
</feature>
<feature type="sequence variant" id="VAR_072350" description="In SCAR16; dbSNP:rs146251364." evidence="31">
    <original>K</original>
    <variation>Q</variation>
    <location>
        <position position="145"/>
    </location>
</feature>
<feature type="sequence variant" id="VAR_071297" description="In SCAR16; dbSNP:rs587777342." evidence="29">
    <original>W</original>
    <variation>C</variation>
    <location>
        <position position="147"/>
    </location>
</feature>
<feature type="sequence variant" id="VAR_071298" description="In SCAR16; dbSNP:rs587777340." evidence="29">
    <original>L</original>
    <variation>F</variation>
    <location>
        <position position="165"/>
    </location>
</feature>
<feature type="sequence variant" id="VAR_071299" description="In SCAR16; dbSNP:rs2039692794." evidence="29">
    <original>S</original>
    <variation>T</variation>
    <location>
        <position position="236"/>
    </location>
</feature>
<feature type="sequence variant" id="VAR_071300" description="In SCAR16; dbSNP:rs587777345." evidence="32">
    <original>M</original>
    <variation>T</variation>
    <location>
        <position position="240"/>
    </location>
</feature>
<feature type="sequence variant" id="VAR_071301" description="In SCAR16; inhibits ubiquitin ligase activity and autoubiquitination; dbSNP:rs587777343." evidence="28 33">
    <original>T</original>
    <variation>M</variation>
    <location>
        <position position="246"/>
    </location>
</feature>
<feature type="mutagenesis site" description="Loss of interaction with FOXP3 and its ability to ubiquitinate FOXP3. Loss of interaction with SMAD3, HSPA8, HSP90AA1 and HSP90AB1. Reduces interaction, ubiquitination and proteasomal degradation of NFATC3. No effect on localization to the mitochondria following oxygen and glucose deprivation-induced cellular stress." evidence="25 30 40 42">
    <original>K</original>
    <variation>A</variation>
    <location>
        <position position="30"/>
    </location>
</feature>
<feature type="mutagenesis site" description="Loss of ability to ubiquitinate FOXP3 and SIRT6. Abolishes STUB1-mediated degradation of CHRNA3. Abolishes autoubiquitination and ubiquitination of ICER-type isoforms of CREM. Reduces interaction, ubiquitination and proteasomal degradation of NFATC3. No effect on localization to the mitochondria following oxygen and glucose deprivation-induced cellular stress." evidence="22 25 27 34 40 42">
    <original>H</original>
    <variation>Q</variation>
    <location>
        <position position="260"/>
    </location>
</feature>
<feature type="mutagenesis site" description="Abolishes E3 ligase activity." evidence="26">
    <original>P</original>
    <variation>A</variation>
    <location>
        <position position="269"/>
    </location>
</feature>
<feature type="sequence conflict" description="In Ref. 2; AAD33400." evidence="51" ref="2">
    <original>A</original>
    <variation>V</variation>
    <location>
        <position position="52"/>
    </location>
</feature>
<feature type="sequence conflict" description="In Ref. 1; AAC18038." evidence="51" ref="1">
    <original>R</original>
    <variation>G</variation>
    <location>
        <position position="272"/>
    </location>
</feature>
<feature type="sequence conflict" description="In Ref. 1; AAC18038." evidence="51" ref="1">
    <original>L</original>
    <variation>F</variation>
    <location>
        <position position="280"/>
    </location>
</feature>
<feature type="helix" evidence="62">
    <location>
        <begin position="26"/>
        <end position="38"/>
    </location>
</feature>
<feature type="helix" evidence="62">
    <location>
        <begin position="42"/>
        <end position="55"/>
    </location>
</feature>
<feature type="helix" evidence="62">
    <location>
        <begin position="60"/>
        <end position="72"/>
    </location>
</feature>
<feature type="helix" evidence="62">
    <location>
        <begin position="76"/>
        <end position="89"/>
    </location>
</feature>
<feature type="helix" evidence="62">
    <location>
        <begin position="94"/>
        <end position="106"/>
    </location>
</feature>
<feature type="helix" evidence="62">
    <location>
        <begin position="110"/>
        <end position="126"/>
    </location>
</feature>
<feature type="helix" evidence="62">
    <location>
        <begin position="134"/>
        <end position="149"/>
    </location>
</feature>
<gene>
    <name evidence="49 53" type="primary">STUB1</name>
    <name evidence="45 48" type="synonym">CHIP</name>
    <name evidence="52" type="ORF">PP1131</name>
</gene>